<name>UBP7_HUMAN</name>
<sequence>MNHQQQQQQQKAGEQQLSEPEDMEMEAGDTDDPPRITQNPVINGNVALSDGHNTAEEDMEDDTSWRSEATFQFTVERFSRLSESVLSPPCFVRNLPWKIMVMPRFYPDRPHQKSVGFFLQCNAESDSTSWSCHAQAVLKIINYRDDEKSFSRRISHLFFHKENDWGFSNFMAWSEVTDPEKGFIDDDKVTFEVFVQADAPHGVAWDSKKHTGYVGLKNQGATCYMNSLLQTLFFTNQLRKAVYMMPTEGDDSSKSVPLALQRVFYELQHSDKPVGTKKLTKSFGWETLDSFMQHDVQELCRVLLDNVENKMKGTCVEGTIPKLFRGKMVSYIQCKEVDYRSDRREDYYDIQLSIKGKKNIFESFVDYVAVEQLDGDNKYDAGEHGLQEAEKGVKFLTLPPVLHLQLMRFMYDPQTDQNIKINDRFEFPEQLPLDEFLQKTDPKDPANYILHAVLVHSGDNHGGHYVVYLNPKGDGKWCKFDDDVVSRCTKEEAIEHNYGGHDDDLSVRHCTNAYMLVYIRESKLSEVLQAVTDHDIPQQLVERLQEEKRIEAQKRKERQEAHLYMQVQIVAEDQFCGHQGNDMYDEEKVKYTVFKVLKNSSLAEFVQSLSQTMGFPQDQIRLWPMQARSNGTKRPAMLDNEADGNKTMIELSDNENPWTIFLETVDPELAASGATLPKFDKDHDVMLFLKMYDPKTRSLNYCGHIYTPISCKIRDLLPVMCDRAGFIQDTSLILYEEVKPNLTERIQDYDVSLDKALDELMDGDIIVFQKDDPENDNSELPTAKEYFRDLYHRVDVIFCDKTIPNDPGFVVTLSNRMNYFQVAKTVAQRLNTDPMLLQFFKSQGYRDGPGNPLRHNYEGTLRDLLQFFKPRQPKKLYYQQLKMKITDFENRRSFKCIWLNSQFREEEITLYPDKHGCVRDLLEECKKAVELGEKASGKLRLLEIVSYKIIGVHQEDELLECLSPATSRTFRIEEIPLDQVDIDKENEMLVTVAHFHKEVFGTFGIPFLLRIHQGEHFREVMKRIQSLLDIQEKEFEKFKFAIVMMGRHQYINEDEYEVNLKDFEPQPGNMSHPRPWLGLDHFNKAPKRSRYTYLEKAIKIHN</sequence>
<organism>
    <name type="scientific">Homo sapiens</name>
    <name type="common">Human</name>
    <dbReference type="NCBI Taxonomy" id="9606"/>
    <lineage>
        <taxon>Eukaryota</taxon>
        <taxon>Metazoa</taxon>
        <taxon>Chordata</taxon>
        <taxon>Craniata</taxon>
        <taxon>Vertebrata</taxon>
        <taxon>Euteleostomi</taxon>
        <taxon>Mammalia</taxon>
        <taxon>Eutheria</taxon>
        <taxon>Euarchontoglires</taxon>
        <taxon>Primates</taxon>
        <taxon>Haplorrhini</taxon>
        <taxon>Catarrhini</taxon>
        <taxon>Hominidae</taxon>
        <taxon>Homo</taxon>
    </lineage>
</organism>
<dbReference type="EC" id="3.4.19.12" evidence="5 7 8 9 13 17 23"/>
<dbReference type="EMBL" id="Z72499">
    <property type="protein sequence ID" value="CAA96580.1"/>
    <property type="molecule type" value="mRNA"/>
</dbReference>
<dbReference type="EMBL" id="AK302771">
    <property type="protein sequence ID" value="BAH13801.1"/>
    <property type="molecule type" value="mRNA"/>
</dbReference>
<dbReference type="EMBL" id="AC022167">
    <property type="status" value="NOT_ANNOTATED_CDS"/>
    <property type="molecule type" value="Genomic_DNA"/>
</dbReference>
<dbReference type="EMBL" id="CH471112">
    <property type="protein sequence ID" value="EAW85194.1"/>
    <property type="molecule type" value="Genomic_DNA"/>
</dbReference>
<dbReference type="CCDS" id="CCDS32385.1">
    <molecule id="Q93009-1"/>
</dbReference>
<dbReference type="CCDS" id="CCDS66941.1">
    <molecule id="Q93009-3"/>
</dbReference>
<dbReference type="RefSeq" id="NP_001273386.2">
    <molecule id="Q93009-3"/>
    <property type="nucleotide sequence ID" value="NM_001286457.2"/>
</dbReference>
<dbReference type="RefSeq" id="NP_001308787.1">
    <property type="nucleotide sequence ID" value="NM_001321858.1"/>
</dbReference>
<dbReference type="RefSeq" id="NP_003461.2">
    <molecule id="Q93009-1"/>
    <property type="nucleotide sequence ID" value="NM_003470.3"/>
</dbReference>
<dbReference type="PDB" id="1NB8">
    <property type="method" value="X-ray"/>
    <property type="resolution" value="2.30 A"/>
    <property type="chains" value="A/B=208-560"/>
</dbReference>
<dbReference type="PDB" id="1NBF">
    <property type="method" value="X-ray"/>
    <property type="resolution" value="2.30 A"/>
    <property type="chains" value="A/B/E=208-560"/>
</dbReference>
<dbReference type="PDB" id="1YY6">
    <property type="method" value="X-ray"/>
    <property type="resolution" value="1.70 A"/>
    <property type="chains" value="A=54-204"/>
</dbReference>
<dbReference type="PDB" id="1YZE">
    <property type="method" value="X-ray"/>
    <property type="resolution" value="2.00 A"/>
    <property type="chains" value="A/B/C=54-205"/>
</dbReference>
<dbReference type="PDB" id="2F1W">
    <property type="method" value="X-ray"/>
    <property type="resolution" value="1.65 A"/>
    <property type="chains" value="A=53-206"/>
</dbReference>
<dbReference type="PDB" id="2F1X">
    <property type="method" value="X-ray"/>
    <property type="resolution" value="2.30 A"/>
    <property type="chains" value="A/B=53-200"/>
</dbReference>
<dbReference type="PDB" id="2F1Y">
    <property type="method" value="X-ray"/>
    <property type="resolution" value="1.70 A"/>
    <property type="chains" value="A=53-198"/>
</dbReference>
<dbReference type="PDB" id="2F1Z">
    <property type="method" value="X-ray"/>
    <property type="resolution" value="3.20 A"/>
    <property type="chains" value="A/B=43-560"/>
</dbReference>
<dbReference type="PDB" id="2FOJ">
    <property type="method" value="X-ray"/>
    <property type="resolution" value="1.60 A"/>
    <property type="chains" value="A=54-205"/>
</dbReference>
<dbReference type="PDB" id="2FOO">
    <property type="method" value="X-ray"/>
    <property type="resolution" value="2.20 A"/>
    <property type="chains" value="A=54-205"/>
</dbReference>
<dbReference type="PDB" id="2FOP">
    <property type="method" value="X-ray"/>
    <property type="resolution" value="2.10 A"/>
    <property type="chains" value="A=54-205"/>
</dbReference>
<dbReference type="PDB" id="2KVR">
    <property type="method" value="NMR"/>
    <property type="chains" value="A=537-664"/>
</dbReference>
<dbReference type="PDB" id="2XXN">
    <property type="method" value="X-ray"/>
    <property type="resolution" value="1.60 A"/>
    <property type="chains" value="A=63-205"/>
</dbReference>
<dbReference type="PDB" id="2YLM">
    <property type="method" value="X-ray"/>
    <property type="resolution" value="2.70 A"/>
    <property type="chains" value="A=560-1084"/>
</dbReference>
<dbReference type="PDB" id="3MQR">
    <property type="method" value="X-ray"/>
    <property type="resolution" value="1.80 A"/>
    <property type="chains" value="A=54-205"/>
</dbReference>
<dbReference type="PDB" id="3MQS">
    <property type="method" value="X-ray"/>
    <property type="resolution" value="2.40 A"/>
    <property type="chains" value="C=54-205"/>
</dbReference>
<dbReference type="PDB" id="4JJQ">
    <property type="method" value="X-ray"/>
    <property type="resolution" value="1.95 A"/>
    <property type="chains" value="A=54-205"/>
</dbReference>
<dbReference type="PDB" id="4KG9">
    <property type="method" value="X-ray"/>
    <property type="resolution" value="1.70 A"/>
    <property type="chains" value="A=54-205"/>
</dbReference>
<dbReference type="PDB" id="4M5W">
    <property type="method" value="X-ray"/>
    <property type="resolution" value="2.24 A"/>
    <property type="chains" value="A=207-560"/>
</dbReference>
<dbReference type="PDB" id="4M5X">
    <property type="method" value="X-ray"/>
    <property type="resolution" value="2.19 A"/>
    <property type="chains" value="A/B=207-560"/>
</dbReference>
<dbReference type="PDB" id="4PYZ">
    <property type="method" value="X-ray"/>
    <property type="resolution" value="2.84 A"/>
    <property type="chains" value="A/B=537-793"/>
</dbReference>
<dbReference type="PDB" id="4WPH">
    <property type="method" value="X-ray"/>
    <property type="resolution" value="2.92 A"/>
    <property type="chains" value="A/B=535-888"/>
</dbReference>
<dbReference type="PDB" id="4WPI">
    <property type="method" value="X-ray"/>
    <property type="resolution" value="3.40 A"/>
    <property type="chains" value="A/B=535-888"/>
</dbReference>
<dbReference type="PDB" id="4YOC">
    <property type="method" value="X-ray"/>
    <property type="resolution" value="2.92 A"/>
    <property type="chains" value="C=560-1102"/>
</dbReference>
<dbReference type="PDB" id="4YSI">
    <property type="method" value="X-ray"/>
    <property type="resolution" value="1.02 A"/>
    <property type="chains" value="A=63-205"/>
</dbReference>
<dbReference type="PDB" id="4Z96">
    <property type="method" value="X-ray"/>
    <property type="resolution" value="2.85 A"/>
    <property type="chains" value="A=560-1083"/>
</dbReference>
<dbReference type="PDB" id="4Z97">
    <property type="method" value="X-ray"/>
    <property type="resolution" value="3.00 A"/>
    <property type="chains" value="A=560-1083"/>
</dbReference>
<dbReference type="PDB" id="5C56">
    <property type="method" value="X-ray"/>
    <property type="resolution" value="2.69 A"/>
    <property type="chains" value="A=560-1102"/>
</dbReference>
<dbReference type="PDB" id="5C6D">
    <property type="method" value="X-ray"/>
    <property type="resolution" value="2.29 A"/>
    <property type="chains" value="A/B=561-881"/>
</dbReference>
<dbReference type="PDB" id="5FWI">
    <property type="method" value="X-ray"/>
    <property type="resolution" value="3.40 A"/>
    <property type="chains" value="C=207-882"/>
</dbReference>
<dbReference type="PDB" id="5GG4">
    <property type="method" value="X-ray"/>
    <property type="resolution" value="3.11 A"/>
    <property type="chains" value="A/B/C/D=560-890"/>
</dbReference>
<dbReference type="PDB" id="5J7T">
    <property type="method" value="X-ray"/>
    <property type="resolution" value="3.20 A"/>
    <property type="chains" value="A=211-881"/>
</dbReference>
<dbReference type="PDB" id="5JTJ">
    <property type="method" value="X-ray"/>
    <property type="resolution" value="3.32 A"/>
    <property type="chains" value="A=209-554, A=1084-1102"/>
</dbReference>
<dbReference type="PDB" id="5JTV">
    <property type="method" value="X-ray"/>
    <property type="resolution" value="3.31 A"/>
    <property type="chains" value="A/C/E/G=207-554, A/C/E/G=882-1102"/>
</dbReference>
<dbReference type="PDB" id="5KYB">
    <property type="method" value="X-ray"/>
    <property type="resolution" value="2.20 A"/>
    <property type="chains" value="A/B=208-554"/>
</dbReference>
<dbReference type="PDB" id="5KYC">
    <property type="method" value="X-ray"/>
    <property type="resolution" value="1.43 A"/>
    <property type="chains" value="B=208-554"/>
</dbReference>
<dbReference type="PDB" id="5KYD">
    <property type="method" value="X-ray"/>
    <property type="resolution" value="1.62 A"/>
    <property type="chains" value="A=208-554"/>
</dbReference>
<dbReference type="PDB" id="5KYE">
    <property type="method" value="X-ray"/>
    <property type="resolution" value="1.97 A"/>
    <property type="chains" value="A/B=208-554"/>
</dbReference>
<dbReference type="PDB" id="5KYF">
    <property type="method" value="X-ray"/>
    <property type="resolution" value="1.45 A"/>
    <property type="chains" value="B=208-554"/>
</dbReference>
<dbReference type="PDB" id="5N9R">
    <property type="method" value="X-ray"/>
    <property type="resolution" value="2.23 A"/>
    <property type="chains" value="A/B=207-560"/>
</dbReference>
<dbReference type="PDB" id="5N9T">
    <property type="method" value="X-ray"/>
    <property type="resolution" value="1.73 A"/>
    <property type="chains" value="A/B=207-560"/>
</dbReference>
<dbReference type="PDB" id="5NGE">
    <property type="method" value="X-ray"/>
    <property type="resolution" value="2.35 A"/>
    <property type="chains" value="A/B=208-560"/>
</dbReference>
<dbReference type="PDB" id="5NGF">
    <property type="method" value="X-ray"/>
    <property type="resolution" value="2.33 A"/>
    <property type="chains" value="A/B=208-560"/>
</dbReference>
<dbReference type="PDB" id="5UQV">
    <property type="method" value="X-ray"/>
    <property type="resolution" value="2.84 A"/>
    <property type="chains" value="A/B=208-554"/>
</dbReference>
<dbReference type="PDB" id="5UQX">
    <property type="method" value="X-ray"/>
    <property type="resolution" value="2.23 A"/>
    <property type="chains" value="A/B=208-555"/>
</dbReference>
<dbReference type="PDB" id="5VS6">
    <property type="method" value="X-ray"/>
    <property type="resolution" value="2.27 A"/>
    <property type="chains" value="A/B=208-560"/>
</dbReference>
<dbReference type="PDB" id="5VSB">
    <property type="method" value="X-ray"/>
    <property type="resolution" value="1.85 A"/>
    <property type="chains" value="A/B=208-560"/>
</dbReference>
<dbReference type="PDB" id="5VSK">
    <property type="method" value="X-ray"/>
    <property type="resolution" value="3.33 A"/>
    <property type="chains" value="A/B=208-560"/>
</dbReference>
<dbReference type="PDB" id="5WHC">
    <property type="method" value="X-ray"/>
    <property type="resolution" value="2.55 A"/>
    <property type="chains" value="A/B=209-554"/>
</dbReference>
<dbReference type="PDB" id="6F5H">
    <property type="method" value="X-ray"/>
    <property type="resolution" value="2.16 A"/>
    <property type="chains" value="A/B=207-560"/>
</dbReference>
<dbReference type="PDB" id="6M1K">
    <property type="method" value="X-ray"/>
    <property type="resolution" value="2.25 A"/>
    <property type="chains" value="A/B=208-554"/>
</dbReference>
<dbReference type="PDB" id="6P5L">
    <property type="method" value="X-ray"/>
    <property type="resolution" value="3.30 A"/>
    <property type="chains" value="A/B=535-890"/>
</dbReference>
<dbReference type="PDB" id="6VN2">
    <property type="method" value="X-ray"/>
    <property type="resolution" value="2.93 A"/>
    <property type="chains" value="A/B=207-555"/>
</dbReference>
<dbReference type="PDB" id="6VN3">
    <property type="method" value="X-ray"/>
    <property type="resolution" value="2.73 A"/>
    <property type="chains" value="A/B=207-555"/>
</dbReference>
<dbReference type="PDB" id="6VN4">
    <property type="method" value="X-ray"/>
    <property type="resolution" value="2.69 A"/>
    <property type="chains" value="A/B=207-555"/>
</dbReference>
<dbReference type="PDB" id="6VN5">
    <property type="method" value="X-ray"/>
    <property type="resolution" value="2.90 A"/>
    <property type="chains" value="A/B=207-555"/>
</dbReference>
<dbReference type="PDB" id="6VN6">
    <property type="method" value="X-ray"/>
    <property type="resolution" value="2.99 A"/>
    <property type="chains" value="A/B=207-555"/>
</dbReference>
<dbReference type="PDB" id="7CM2">
    <property type="method" value="X-ray"/>
    <property type="resolution" value="2.25 A"/>
    <property type="chains" value="A/B=208-560"/>
</dbReference>
<dbReference type="PDB" id="7VIJ">
    <property type="method" value="X-ray"/>
    <property type="resolution" value="2.30 A"/>
    <property type="chains" value="A=560-1083"/>
</dbReference>
<dbReference type="PDB" id="7XHH">
    <property type="method" value="X-ray"/>
    <property type="resolution" value="2.10 A"/>
    <property type="chains" value="A/B=207-554"/>
</dbReference>
<dbReference type="PDB" id="7XHK">
    <property type="method" value="X-ray"/>
    <property type="resolution" value="2.30 A"/>
    <property type="chains" value="B=211-553"/>
</dbReference>
<dbReference type="PDB" id="7XPY">
    <property type="method" value="X-ray"/>
    <property type="resolution" value="2.35 A"/>
    <property type="chains" value="A=560-1102"/>
</dbReference>
<dbReference type="PDB" id="8D4Z">
    <property type="method" value="X-ray"/>
    <property type="resolution" value="2.26 A"/>
    <property type="chains" value="A/B=207-560"/>
</dbReference>
<dbReference type="PDB" id="9DEK">
    <property type="method" value="X-ray"/>
    <property type="resolution" value="2.00 A"/>
    <property type="chains" value="A/B=208-554"/>
</dbReference>
<dbReference type="PDB" id="9DEL">
    <property type="method" value="X-ray"/>
    <property type="resolution" value="2.50 A"/>
    <property type="chains" value="A/B=208-554"/>
</dbReference>
<dbReference type="PDB" id="9DEM">
    <property type="method" value="X-ray"/>
    <property type="resolution" value="1.77 A"/>
    <property type="chains" value="A=208-554"/>
</dbReference>
<dbReference type="PDB" id="9DEN">
    <property type="method" value="X-ray"/>
    <property type="resolution" value="2.93 A"/>
    <property type="chains" value="A/B=208-554"/>
</dbReference>
<dbReference type="PDB" id="9DEO">
    <property type="method" value="X-ray"/>
    <property type="resolution" value="2.70 A"/>
    <property type="chains" value="A/B=208-554"/>
</dbReference>
<dbReference type="PDB" id="9DEP">
    <property type="method" value="X-ray"/>
    <property type="resolution" value="2.57 A"/>
    <property type="chains" value="A/B/E=208-554"/>
</dbReference>
<dbReference type="PDB" id="9FIO">
    <property type="method" value="X-ray"/>
    <property type="resolution" value="2.60 A"/>
    <property type="chains" value="A/B=208-560"/>
</dbReference>
<dbReference type="PDB" id="9FIP">
    <property type="method" value="X-ray"/>
    <property type="resolution" value="3.06 A"/>
    <property type="chains" value="A/B=207-560"/>
</dbReference>
<dbReference type="PDB" id="9FIQ">
    <property type="method" value="X-ray"/>
    <property type="resolution" value="2.86 A"/>
    <property type="chains" value="A/B=207-560"/>
</dbReference>
<dbReference type="PDB" id="9FIR">
    <property type="method" value="X-ray"/>
    <property type="resolution" value="2.76 A"/>
    <property type="chains" value="A/B=207-560"/>
</dbReference>
<dbReference type="PDB" id="9FIS">
    <property type="method" value="X-ray"/>
    <property type="resolution" value="2.77 A"/>
    <property type="chains" value="A/B=208-560"/>
</dbReference>
<dbReference type="PDB" id="9FIT">
    <property type="method" value="X-ray"/>
    <property type="resolution" value="2.70 A"/>
    <property type="chains" value="A/B=207-560"/>
</dbReference>
<dbReference type="PDB" id="9FIU">
    <property type="method" value="X-ray"/>
    <property type="resolution" value="3.37 A"/>
    <property type="chains" value="A/B=207-560"/>
</dbReference>
<dbReference type="PDB" id="9FIV">
    <property type="method" value="X-ray"/>
    <property type="resolution" value="2.70 A"/>
    <property type="chains" value="A/B=207-560"/>
</dbReference>
<dbReference type="PDB" id="9IJU">
    <property type="method" value="X-ray"/>
    <property type="resolution" value="2.46 A"/>
    <property type="chains" value="A/C/E/G=208-560"/>
</dbReference>
<dbReference type="PDB" id="9IML">
    <property type="method" value="X-ray"/>
    <property type="resolution" value="2.78 A"/>
    <property type="chains" value="A/C/E/G=208-560"/>
</dbReference>
<dbReference type="PDBsum" id="1NB8"/>
<dbReference type="PDBsum" id="1NBF"/>
<dbReference type="PDBsum" id="1YY6"/>
<dbReference type="PDBsum" id="1YZE"/>
<dbReference type="PDBsum" id="2F1W"/>
<dbReference type="PDBsum" id="2F1X"/>
<dbReference type="PDBsum" id="2F1Y"/>
<dbReference type="PDBsum" id="2F1Z"/>
<dbReference type="PDBsum" id="2FOJ"/>
<dbReference type="PDBsum" id="2FOO"/>
<dbReference type="PDBsum" id="2FOP"/>
<dbReference type="PDBsum" id="2KVR"/>
<dbReference type="PDBsum" id="2XXN"/>
<dbReference type="PDBsum" id="2YLM"/>
<dbReference type="PDBsum" id="3MQR"/>
<dbReference type="PDBsum" id="3MQS"/>
<dbReference type="PDBsum" id="4JJQ"/>
<dbReference type="PDBsum" id="4KG9"/>
<dbReference type="PDBsum" id="4M5W"/>
<dbReference type="PDBsum" id="4M5X"/>
<dbReference type="PDBsum" id="4PYZ"/>
<dbReference type="PDBsum" id="4WPH"/>
<dbReference type="PDBsum" id="4WPI"/>
<dbReference type="PDBsum" id="4YOC"/>
<dbReference type="PDBsum" id="4YSI"/>
<dbReference type="PDBsum" id="4Z96"/>
<dbReference type="PDBsum" id="4Z97"/>
<dbReference type="PDBsum" id="5C56"/>
<dbReference type="PDBsum" id="5C6D"/>
<dbReference type="PDBsum" id="5FWI"/>
<dbReference type="PDBsum" id="5GG4"/>
<dbReference type="PDBsum" id="5J7T"/>
<dbReference type="PDBsum" id="5JTJ"/>
<dbReference type="PDBsum" id="5JTV"/>
<dbReference type="PDBsum" id="5KYB"/>
<dbReference type="PDBsum" id="5KYC"/>
<dbReference type="PDBsum" id="5KYD"/>
<dbReference type="PDBsum" id="5KYE"/>
<dbReference type="PDBsum" id="5KYF"/>
<dbReference type="PDBsum" id="5N9R"/>
<dbReference type="PDBsum" id="5N9T"/>
<dbReference type="PDBsum" id="5NGE"/>
<dbReference type="PDBsum" id="5NGF"/>
<dbReference type="PDBsum" id="5UQV"/>
<dbReference type="PDBsum" id="5UQX"/>
<dbReference type="PDBsum" id="5VS6"/>
<dbReference type="PDBsum" id="5VSB"/>
<dbReference type="PDBsum" id="5VSK"/>
<dbReference type="PDBsum" id="5WHC"/>
<dbReference type="PDBsum" id="6F5H"/>
<dbReference type="PDBsum" id="6M1K"/>
<dbReference type="PDBsum" id="6P5L"/>
<dbReference type="PDBsum" id="6VN2"/>
<dbReference type="PDBsum" id="6VN3"/>
<dbReference type="PDBsum" id="6VN4"/>
<dbReference type="PDBsum" id="6VN5"/>
<dbReference type="PDBsum" id="6VN6"/>
<dbReference type="PDBsum" id="7CM2"/>
<dbReference type="PDBsum" id="7VIJ"/>
<dbReference type="PDBsum" id="7XHH"/>
<dbReference type="PDBsum" id="7XHK"/>
<dbReference type="PDBsum" id="7XPY"/>
<dbReference type="PDBsum" id="8D4Z"/>
<dbReference type="PDBsum" id="9DEK"/>
<dbReference type="PDBsum" id="9DEL"/>
<dbReference type="PDBsum" id="9DEM"/>
<dbReference type="PDBsum" id="9DEN"/>
<dbReference type="PDBsum" id="9DEO"/>
<dbReference type="PDBsum" id="9DEP"/>
<dbReference type="PDBsum" id="9FIO"/>
<dbReference type="PDBsum" id="9FIP"/>
<dbReference type="PDBsum" id="9FIQ"/>
<dbReference type="PDBsum" id="9FIR"/>
<dbReference type="PDBsum" id="9FIS"/>
<dbReference type="PDBsum" id="9FIT"/>
<dbReference type="PDBsum" id="9FIU"/>
<dbReference type="PDBsum" id="9FIV"/>
<dbReference type="PDBsum" id="9IJU"/>
<dbReference type="PDBsum" id="9IML"/>
<dbReference type="BMRB" id="Q93009"/>
<dbReference type="SMR" id="Q93009"/>
<dbReference type="BioGRID" id="113622">
    <property type="interactions" value="878"/>
</dbReference>
<dbReference type="ComplexPortal" id="CPX-9461">
    <property type="entry name" value="USP7-TRIM27 ubiquitinase/deubiquitinase complex"/>
</dbReference>
<dbReference type="CORUM" id="Q93009"/>
<dbReference type="DIP" id="DIP-29053N"/>
<dbReference type="ELM" id="Q93009"/>
<dbReference type="FunCoup" id="Q93009">
    <property type="interactions" value="4729"/>
</dbReference>
<dbReference type="IntAct" id="Q93009">
    <property type="interactions" value="283"/>
</dbReference>
<dbReference type="MINT" id="Q93009"/>
<dbReference type="STRING" id="9606.ENSP00000343535"/>
<dbReference type="BindingDB" id="Q93009"/>
<dbReference type="ChEMBL" id="CHEMBL2157850"/>
<dbReference type="MEROPS" id="C19.016"/>
<dbReference type="GlyCosmos" id="Q93009">
    <property type="glycosylation" value="1 site, 1 glycan"/>
</dbReference>
<dbReference type="GlyGen" id="Q93009">
    <property type="glycosylation" value="3 sites, 1 N-linked glycan (1 site), 1 O-linked glycan (2 sites)"/>
</dbReference>
<dbReference type="iPTMnet" id="Q93009"/>
<dbReference type="MetOSite" id="Q93009"/>
<dbReference type="PhosphoSitePlus" id="Q93009"/>
<dbReference type="SwissPalm" id="Q93009"/>
<dbReference type="BioMuta" id="USP7"/>
<dbReference type="DMDM" id="212276477"/>
<dbReference type="jPOST" id="Q93009"/>
<dbReference type="MassIVE" id="Q93009"/>
<dbReference type="PaxDb" id="9606-ENSP00000343535"/>
<dbReference type="PeptideAtlas" id="Q93009"/>
<dbReference type="ProteomicsDB" id="6915"/>
<dbReference type="ProteomicsDB" id="75669">
    <molecule id="Q93009-1"/>
</dbReference>
<dbReference type="Pumba" id="Q93009"/>
<dbReference type="ABCD" id="Q93009">
    <property type="antibodies" value="5 sequenced antibodies"/>
</dbReference>
<dbReference type="Antibodypedia" id="2881">
    <property type="antibodies" value="777 antibodies from 43 providers"/>
</dbReference>
<dbReference type="DNASU" id="7874"/>
<dbReference type="Ensembl" id="ENST00000344836.9">
    <molecule id="Q93009-1"/>
    <property type="protein sequence ID" value="ENSP00000343535.4"/>
    <property type="gene ID" value="ENSG00000187555.17"/>
</dbReference>
<dbReference type="Ensembl" id="ENST00000381886.8">
    <molecule id="Q93009-3"/>
    <property type="protein sequence ID" value="ENSP00000371310.4"/>
    <property type="gene ID" value="ENSG00000187555.17"/>
</dbReference>
<dbReference type="GeneID" id="7874"/>
<dbReference type="KEGG" id="hsa:7874"/>
<dbReference type="MANE-Select" id="ENST00000344836.9">
    <property type="protein sequence ID" value="ENSP00000343535.4"/>
    <property type="RefSeq nucleotide sequence ID" value="NM_003470.3"/>
    <property type="RefSeq protein sequence ID" value="NP_003461.2"/>
</dbReference>
<dbReference type="UCSC" id="uc002czk.4">
    <molecule id="Q93009-1"/>
    <property type="organism name" value="human"/>
</dbReference>
<dbReference type="AGR" id="HGNC:12630"/>
<dbReference type="CTD" id="7874"/>
<dbReference type="DisGeNET" id="7874"/>
<dbReference type="GeneCards" id="USP7"/>
<dbReference type="HGNC" id="HGNC:12630">
    <property type="gene designation" value="USP7"/>
</dbReference>
<dbReference type="HPA" id="ENSG00000187555">
    <property type="expression patterns" value="Low tissue specificity"/>
</dbReference>
<dbReference type="MalaCards" id="USP7"/>
<dbReference type="MIM" id="602519">
    <property type="type" value="gene"/>
</dbReference>
<dbReference type="MIM" id="616863">
    <property type="type" value="phenotype"/>
</dbReference>
<dbReference type="neXtProt" id="NX_Q93009"/>
<dbReference type="OpenTargets" id="ENSG00000187555"/>
<dbReference type="Orphanet" id="500055">
    <property type="disease" value="Hao-Fountain syndrome due to 16p13.2 microdeletion"/>
</dbReference>
<dbReference type="Orphanet" id="643538">
    <property type="disease" value="Hao-Fountain syndrome due to USP7 mutation"/>
</dbReference>
<dbReference type="PharmGKB" id="PA37255"/>
<dbReference type="VEuPathDB" id="HostDB:ENSG00000187555"/>
<dbReference type="eggNOG" id="KOG1863">
    <property type="taxonomic scope" value="Eukaryota"/>
</dbReference>
<dbReference type="GeneTree" id="ENSGT00940000156053"/>
<dbReference type="InParanoid" id="Q93009"/>
<dbReference type="OMA" id="HTAHHRF"/>
<dbReference type="OrthoDB" id="289038at2759"/>
<dbReference type="PAN-GO" id="Q93009">
    <property type="GO annotations" value="6 GO annotations based on evolutionary models"/>
</dbReference>
<dbReference type="PhylomeDB" id="Q93009"/>
<dbReference type="TreeFam" id="TF105667"/>
<dbReference type="PathwayCommons" id="Q93009"/>
<dbReference type="Reactome" id="R-HSA-5689880">
    <property type="pathway name" value="Ub-specific processing proteases"/>
</dbReference>
<dbReference type="Reactome" id="R-HSA-6781823">
    <property type="pathway name" value="Formation of TC-NER Pre-Incision Complex"/>
</dbReference>
<dbReference type="Reactome" id="R-HSA-6781827">
    <property type="pathway name" value="Transcription-Coupled Nucleotide Excision Repair (TC-NER)"/>
</dbReference>
<dbReference type="Reactome" id="R-HSA-6782135">
    <property type="pathway name" value="Dual incision in TC-NER"/>
</dbReference>
<dbReference type="Reactome" id="R-HSA-6782210">
    <property type="pathway name" value="Gap-filling DNA repair synthesis and ligation in TC-NER"/>
</dbReference>
<dbReference type="Reactome" id="R-HSA-6804757">
    <property type="pathway name" value="Regulation of TP53 Degradation"/>
</dbReference>
<dbReference type="Reactome" id="R-HSA-8866652">
    <property type="pathway name" value="Synthesis of active ubiquitin: roles of E1 and E2 enzymes"/>
</dbReference>
<dbReference type="Reactome" id="R-HSA-8948747">
    <property type="pathway name" value="Regulation of PTEN localization"/>
</dbReference>
<dbReference type="SABIO-RK" id="Q93009"/>
<dbReference type="SignaLink" id="Q93009"/>
<dbReference type="SIGNOR" id="Q93009"/>
<dbReference type="BioGRID-ORCS" id="7874">
    <property type="hits" value="567 hits in 1208 CRISPR screens"/>
</dbReference>
<dbReference type="ChiTaRS" id="USP7">
    <property type="organism name" value="human"/>
</dbReference>
<dbReference type="EvolutionaryTrace" id="Q93009"/>
<dbReference type="GeneWiki" id="USP7"/>
<dbReference type="GenomeRNAi" id="7874"/>
<dbReference type="Pharos" id="Q93009">
    <property type="development level" value="Tchem"/>
</dbReference>
<dbReference type="PRO" id="PR:Q93009"/>
<dbReference type="Proteomes" id="UP000005640">
    <property type="component" value="Chromosome 16"/>
</dbReference>
<dbReference type="RNAct" id="Q93009">
    <property type="molecule type" value="protein"/>
</dbReference>
<dbReference type="Bgee" id="ENSG00000187555">
    <property type="expression patterns" value="Expressed in Brodmann (1909) area 23 and 208 other cell types or tissues"/>
</dbReference>
<dbReference type="ExpressionAtlas" id="Q93009">
    <property type="expression patterns" value="baseline and differential"/>
</dbReference>
<dbReference type="GO" id="GO:0005694">
    <property type="term" value="C:chromosome"/>
    <property type="evidence" value="ECO:0007669"/>
    <property type="project" value="UniProtKB-SubCell"/>
</dbReference>
<dbReference type="GO" id="GO:0005829">
    <property type="term" value="C:cytosol"/>
    <property type="evidence" value="ECO:0000314"/>
    <property type="project" value="UniProtKB"/>
</dbReference>
<dbReference type="GO" id="GO:0016604">
    <property type="term" value="C:nuclear body"/>
    <property type="evidence" value="ECO:0007005"/>
    <property type="project" value="UniProtKB"/>
</dbReference>
<dbReference type="GO" id="GO:0005654">
    <property type="term" value="C:nucleoplasm"/>
    <property type="evidence" value="ECO:0000304"/>
    <property type="project" value="Reactome"/>
</dbReference>
<dbReference type="GO" id="GO:0005634">
    <property type="term" value="C:nucleus"/>
    <property type="evidence" value="ECO:0000314"/>
    <property type="project" value="UniProtKB"/>
</dbReference>
<dbReference type="GO" id="GO:0016605">
    <property type="term" value="C:PML body"/>
    <property type="evidence" value="ECO:0000314"/>
    <property type="project" value="UniProt"/>
</dbReference>
<dbReference type="GO" id="GO:0032991">
    <property type="term" value="C:protein-containing complex"/>
    <property type="evidence" value="ECO:0000314"/>
    <property type="project" value="UniProtKB"/>
</dbReference>
<dbReference type="GO" id="GO:0004843">
    <property type="term" value="F:cysteine-type deubiquitinase activity"/>
    <property type="evidence" value="ECO:0000314"/>
    <property type="project" value="UniProtKB"/>
</dbReference>
<dbReference type="GO" id="GO:0004197">
    <property type="term" value="F:cysteine-type endopeptidase activity"/>
    <property type="evidence" value="ECO:0000315"/>
    <property type="project" value="UniProtKB"/>
</dbReference>
<dbReference type="GO" id="GO:0101005">
    <property type="term" value="F:deubiquitinase activity"/>
    <property type="evidence" value="ECO:0000315"/>
    <property type="project" value="UniProtKB"/>
</dbReference>
<dbReference type="GO" id="GO:1990380">
    <property type="term" value="F:K48-linked deubiquitinase activity"/>
    <property type="evidence" value="ECO:0000314"/>
    <property type="project" value="UniProtKB"/>
</dbReference>
<dbReference type="GO" id="GO:0002039">
    <property type="term" value="F:p53 binding"/>
    <property type="evidence" value="ECO:0000314"/>
    <property type="project" value="UniProtKB"/>
</dbReference>
<dbReference type="GO" id="GO:0006307">
    <property type="term" value="P:DNA alkylation repair"/>
    <property type="evidence" value="ECO:0000314"/>
    <property type="project" value="UniProtKB"/>
</dbReference>
<dbReference type="GO" id="GO:0035520">
    <property type="term" value="P:monoubiquitinated protein deubiquitination"/>
    <property type="evidence" value="ECO:0000314"/>
    <property type="project" value="MGI"/>
</dbReference>
<dbReference type="GO" id="GO:0044027">
    <property type="term" value="P:negative regulation of gene expression via chromosomal CpG island methylation"/>
    <property type="evidence" value="ECO:0000315"/>
    <property type="project" value="UniProtKB"/>
</dbReference>
<dbReference type="GO" id="GO:0045721">
    <property type="term" value="P:negative regulation of gluconeogenesis"/>
    <property type="evidence" value="ECO:0000314"/>
    <property type="project" value="UniProtKB"/>
</dbReference>
<dbReference type="GO" id="GO:0032088">
    <property type="term" value="P:negative regulation of NF-kappaB transcription factor activity"/>
    <property type="evidence" value="ECO:0000314"/>
    <property type="project" value="UniProtKB"/>
</dbReference>
<dbReference type="GO" id="GO:0032435">
    <property type="term" value="P:negative regulation of proteasomal ubiquitin-dependent protein catabolic process"/>
    <property type="evidence" value="ECO:0000315"/>
    <property type="project" value="UniProtKB"/>
</dbReference>
<dbReference type="GO" id="GO:1904262">
    <property type="term" value="P:negative regulation of TORC1 signaling"/>
    <property type="evidence" value="ECO:0000314"/>
    <property type="project" value="UniProt"/>
</dbReference>
<dbReference type="GO" id="GO:0016579">
    <property type="term" value="P:protein deubiquitination"/>
    <property type="evidence" value="ECO:0000314"/>
    <property type="project" value="UniProtKB"/>
</dbReference>
<dbReference type="GO" id="GO:0050821">
    <property type="term" value="P:protein stabilization"/>
    <property type="evidence" value="ECO:0000314"/>
    <property type="project" value="UniProtKB"/>
</dbReference>
<dbReference type="GO" id="GO:0016567">
    <property type="term" value="P:protein ubiquitination"/>
    <property type="evidence" value="ECO:0000304"/>
    <property type="project" value="Reactome"/>
</dbReference>
<dbReference type="GO" id="GO:0006508">
    <property type="term" value="P:proteolysis"/>
    <property type="evidence" value="ECO:0007669"/>
    <property type="project" value="UniProtKB-KW"/>
</dbReference>
<dbReference type="GO" id="GO:0042752">
    <property type="term" value="P:regulation of circadian rhythm"/>
    <property type="evidence" value="ECO:0000314"/>
    <property type="project" value="UniProtKB"/>
</dbReference>
<dbReference type="GO" id="GO:0051090">
    <property type="term" value="P:regulation of DNA-binding transcription factor activity"/>
    <property type="evidence" value="ECO:0000314"/>
    <property type="project" value="UniProtKB"/>
</dbReference>
<dbReference type="GO" id="GO:0070203">
    <property type="term" value="P:regulation of establishment of protein localization to telomere"/>
    <property type="evidence" value="ECO:0000314"/>
    <property type="project" value="BHF-UCL"/>
</dbReference>
<dbReference type="GO" id="GO:0031647">
    <property type="term" value="P:regulation of protein stability"/>
    <property type="evidence" value="ECO:0000314"/>
    <property type="project" value="UniProtKB"/>
</dbReference>
<dbReference type="GO" id="GO:1905279">
    <property type="term" value="P:regulation of retrograde transport, endosome to Golgi"/>
    <property type="evidence" value="ECO:0000315"/>
    <property type="project" value="UniProtKB"/>
</dbReference>
<dbReference type="GO" id="GO:1901796">
    <property type="term" value="P:regulation of signal transduction by p53 class mediator"/>
    <property type="evidence" value="ECO:0000304"/>
    <property type="project" value="Reactome"/>
</dbReference>
<dbReference type="GO" id="GO:1904353">
    <property type="term" value="P:regulation of telomere capping"/>
    <property type="evidence" value="ECO:0000304"/>
    <property type="project" value="BHF-UCL"/>
</dbReference>
<dbReference type="GO" id="GO:0048511">
    <property type="term" value="P:rhythmic process"/>
    <property type="evidence" value="ECO:0007669"/>
    <property type="project" value="UniProtKB-KW"/>
</dbReference>
<dbReference type="GO" id="GO:0075342">
    <property type="term" value="P:symbiont-mediated disruption of host cell PML body"/>
    <property type="evidence" value="ECO:0000314"/>
    <property type="project" value="UniProt"/>
</dbReference>
<dbReference type="GO" id="GO:0006283">
    <property type="term" value="P:transcription-coupled nucleotide-excision repair"/>
    <property type="evidence" value="ECO:0000315"/>
    <property type="project" value="UniProtKB"/>
</dbReference>
<dbReference type="CDD" id="cd03772">
    <property type="entry name" value="MATH_HAUSP"/>
    <property type="match status" value="1"/>
</dbReference>
<dbReference type="CDD" id="cd02659">
    <property type="entry name" value="peptidase_C19C"/>
    <property type="match status" value="1"/>
</dbReference>
<dbReference type="DisProt" id="DP00941"/>
<dbReference type="FunFam" id="3.10.20.90:FF:000057">
    <property type="entry name" value="Putative ubiquitin carboxyl-terminal hydrolase 7"/>
    <property type="match status" value="1"/>
</dbReference>
<dbReference type="FunFam" id="3.10.20.90:FF:000064">
    <property type="entry name" value="Putative ubiquitin carboxyl-terminal hydrolase 7"/>
    <property type="match status" value="1"/>
</dbReference>
<dbReference type="FunFam" id="2.60.210.10:FF:000006">
    <property type="entry name" value="Ubiquitin carboxyl-terminal hydrolase 7"/>
    <property type="match status" value="1"/>
</dbReference>
<dbReference type="FunFam" id="3.90.70.10:FF:000005">
    <property type="entry name" value="Ubiquitin carboxyl-terminal hydrolase 7"/>
    <property type="match status" value="1"/>
</dbReference>
<dbReference type="Gene3D" id="2.60.210.10">
    <property type="entry name" value="Apoptosis, Tumor Necrosis Factor Receptor Associated Protein 2, Chain A"/>
    <property type="match status" value="1"/>
</dbReference>
<dbReference type="Gene3D" id="3.90.70.10">
    <property type="entry name" value="Cysteine proteinases"/>
    <property type="match status" value="1"/>
</dbReference>
<dbReference type="Gene3D" id="3.10.20.90">
    <property type="entry name" value="Phosphatidylinositol 3-kinase Catalytic Subunit, Chain A, domain 1"/>
    <property type="match status" value="2"/>
</dbReference>
<dbReference type="IDEAL" id="IID00176"/>
<dbReference type="InterPro" id="IPR002083">
    <property type="entry name" value="MATH/TRAF_dom"/>
</dbReference>
<dbReference type="InterPro" id="IPR038765">
    <property type="entry name" value="Papain-like_cys_pep_sf"/>
</dbReference>
<dbReference type="InterPro" id="IPR050164">
    <property type="entry name" value="Peptidase_C19"/>
</dbReference>
<dbReference type="InterPro" id="IPR001394">
    <property type="entry name" value="Peptidase_C19_UCH"/>
</dbReference>
<dbReference type="InterPro" id="IPR008974">
    <property type="entry name" value="TRAF-like"/>
</dbReference>
<dbReference type="InterPro" id="IPR024729">
    <property type="entry name" value="USP7_ICP0-binding_dom"/>
</dbReference>
<dbReference type="InterPro" id="IPR029346">
    <property type="entry name" value="USP_C"/>
</dbReference>
<dbReference type="InterPro" id="IPR018200">
    <property type="entry name" value="USP_CS"/>
</dbReference>
<dbReference type="InterPro" id="IPR028889">
    <property type="entry name" value="USP_dom"/>
</dbReference>
<dbReference type="PANTHER" id="PTHR24006">
    <property type="entry name" value="UBIQUITIN CARBOXYL-TERMINAL HYDROLASE"/>
    <property type="match status" value="1"/>
</dbReference>
<dbReference type="PANTHER" id="PTHR24006:SF644">
    <property type="entry name" value="UBIQUITIN CARBOXYL-TERMINAL HYDROLASE 7"/>
    <property type="match status" value="1"/>
</dbReference>
<dbReference type="Pfam" id="PF22486">
    <property type="entry name" value="MATH_2"/>
    <property type="match status" value="1"/>
</dbReference>
<dbReference type="Pfam" id="PF00443">
    <property type="entry name" value="UCH"/>
    <property type="match status" value="1"/>
</dbReference>
<dbReference type="Pfam" id="PF14533">
    <property type="entry name" value="USP7_C2"/>
    <property type="match status" value="1"/>
</dbReference>
<dbReference type="Pfam" id="PF12436">
    <property type="entry name" value="USP7_ICP0_bdg"/>
    <property type="match status" value="1"/>
</dbReference>
<dbReference type="SMART" id="SM00061">
    <property type="entry name" value="MATH"/>
    <property type="match status" value="1"/>
</dbReference>
<dbReference type="SUPFAM" id="SSF54001">
    <property type="entry name" value="Cysteine proteinases"/>
    <property type="match status" value="1"/>
</dbReference>
<dbReference type="SUPFAM" id="SSF49599">
    <property type="entry name" value="TRAF domain-like"/>
    <property type="match status" value="1"/>
</dbReference>
<dbReference type="PROSITE" id="PS50144">
    <property type="entry name" value="MATH"/>
    <property type="match status" value="1"/>
</dbReference>
<dbReference type="PROSITE" id="PS00972">
    <property type="entry name" value="USP_1"/>
    <property type="match status" value="1"/>
</dbReference>
<dbReference type="PROSITE" id="PS00973">
    <property type="entry name" value="USP_2"/>
    <property type="match status" value="1"/>
</dbReference>
<dbReference type="PROSITE" id="PS50235">
    <property type="entry name" value="USP_3"/>
    <property type="match status" value="1"/>
</dbReference>
<feature type="chain" id="PRO_0000080626" description="Ubiquitin carboxyl-terminal hydrolase 7">
    <location>
        <begin position="1"/>
        <end position="1102"/>
    </location>
</feature>
<feature type="domain" description="MATH" evidence="3">
    <location>
        <begin position="68"/>
        <end position="195"/>
    </location>
</feature>
<feature type="domain" description="USP">
    <location>
        <begin position="214"/>
        <end position="521"/>
    </location>
</feature>
<feature type="region of interest" description="Interaction with TSPYL5" evidence="21">
    <location>
        <begin position="1"/>
        <end position="208"/>
    </location>
</feature>
<feature type="region of interest" description="Disordered" evidence="4">
    <location>
        <begin position="1"/>
        <end position="38"/>
    </location>
</feature>
<feature type="region of interest" description="Interaction with p53/TP53, MDM2 and EBNA1" evidence="8">
    <location>
        <begin position="53"/>
        <end position="208"/>
    </location>
</feature>
<feature type="region of interest" description="Necessary for nuclear localization">
    <location>
        <begin position="70"/>
        <end position="205"/>
    </location>
</feature>
<feature type="region of interest" description="Interaction with ICP0/VMW110" evidence="10">
    <location>
        <begin position="622"/>
        <end position="801"/>
    </location>
</feature>
<feature type="compositionally biased region" description="Low complexity" evidence="4">
    <location>
        <begin position="1"/>
        <end position="10"/>
    </location>
</feature>
<feature type="compositionally biased region" description="Acidic residues" evidence="4">
    <location>
        <begin position="19"/>
        <end position="31"/>
    </location>
</feature>
<feature type="active site" description="Nucleophile" evidence="7 35 52 54 55 56 57 58">
    <location>
        <position position="223"/>
    </location>
</feature>
<feature type="active site" description="Proton acceptor" evidence="53">
    <location>
        <position position="464"/>
    </location>
</feature>
<feature type="modified residue" description="Phosphoserine" evidence="14 60 62 63 64 65">
    <location>
        <position position="18"/>
    </location>
</feature>
<feature type="modified residue" description="Phosphoserine" evidence="2">
    <location>
        <position position="49"/>
    </location>
</feature>
<feature type="modified residue" description="N6-acetyllysine; alternate" evidence="61">
    <location>
        <position position="869"/>
    </location>
</feature>
<feature type="modified residue" description="Phosphoserine" evidence="14 60">
    <location>
        <position position="963"/>
    </location>
</feature>
<feature type="modified residue" description="N6-acetyllysine" evidence="61">
    <location>
        <position position="1084"/>
    </location>
</feature>
<feature type="modified residue" description="N6-acetyllysine" evidence="61">
    <location>
        <position position="1096"/>
    </location>
</feature>
<feature type="cross-link" description="Glycyl lysine isopeptide (Lys-Gly) (interchain with G-Cter in SUMO2); alternate" evidence="66 67">
    <location>
        <position position="869"/>
    </location>
</feature>
<feature type="cross-link" description="Glycyl lysine isopeptide (Lys-Gly) (interchain with G-Cter in ubiquitin); alternate" evidence="14">
    <location>
        <position position="869"/>
    </location>
</feature>
<feature type="cross-link" description="Glycyl lysine isopeptide (Lys-Gly) (interchain with G-Cter in SUMO2)" evidence="67">
    <location>
        <position position="882"/>
    </location>
</feature>
<feature type="splice variant" id="VSP_054884" description="In isoform 3." evidence="49">
    <original>MNHQQQQQQQKAGEQQLSEPEDMEM</original>
    <variation>MAGNHRLGL</variation>
    <location>
        <begin position="1"/>
        <end position="25"/>
    </location>
</feature>
<feature type="sequence variant" id="VAR_086825" description="In HAFOUS; when expressed in USP7-deficient cells does not rescue defective endosomal protein recycling and reduced F-actin levels." evidence="37">
    <location>
        <begin position="143"/>
        <end position="1102"/>
    </location>
</feature>
<feature type="sequence variant" id="VAR_086826" description="In HAFOUS; dbSNP:rs1555465642." evidence="43">
    <original>M</original>
    <variation>I</variation>
    <location>
        <position position="225"/>
    </location>
</feature>
<feature type="sequence variant" id="VAR_086827" description="In HAFOUS; dbSNP:rs2141200474." evidence="43">
    <original>E</original>
    <variation>K</variation>
    <location>
        <position position="345"/>
    </location>
</feature>
<feature type="sequence variant" id="VAR_086828" description="In HAFOUS." evidence="43">
    <original>L</original>
    <variation>F</variation>
    <location>
        <position position="373"/>
    </location>
</feature>
<feature type="sequence variant" id="VAR_086829" description="In HAFOUS." evidence="43">
    <original>G</original>
    <variation>D</variation>
    <location>
        <position position="392"/>
    </location>
</feature>
<feature type="sequence variant" id="VAR_086830" description="In HAFOUS." evidence="43">
    <original>V</original>
    <variation>G</variation>
    <location>
        <position position="485"/>
    </location>
</feature>
<feature type="sequence variant" id="VAR_086831" description="In HAFOUS." evidence="43">
    <location>
        <begin position="576"/>
        <end position="1102"/>
    </location>
</feature>
<feature type="sequence variant" id="VAR_086832" description="In HAFOUS; uncertain significance; the patient also carries a de novo clinically relevant variant in SLC2A1." evidence="43">
    <original>L</original>
    <variation>P</variation>
    <location>
        <position position="757"/>
    </location>
</feature>
<feature type="sequence variant" id="VAR_086833" description="In HAFOUS." evidence="43">
    <original>I</original>
    <variation>T</variation>
    <location>
        <position position="766"/>
    </location>
</feature>
<feature type="sequence variant" id="VAR_086834" description="In HAFOUS." evidence="43">
    <original>D</original>
    <variation>N</variation>
    <location>
        <position position="1080"/>
    </location>
</feature>
<feature type="mutagenesis site" description="Decreased binding to p53/TP53 and MDM2." evidence="11">
    <original>D</original>
    <variation>A</variation>
    <location>
        <position position="164"/>
    </location>
</feature>
<feature type="mutagenesis site" description="Loss of binding to p53/TP53 and MDM2." evidence="11">
    <original>W</original>
    <variation>A</variation>
    <location>
        <position position="165"/>
    </location>
</feature>
<feature type="mutagenesis site" description="Complete loss of activity. Localized in the nucleus and does not inhibit FOXO4-dependent transcriptional activity. Loss of ability to deubiquitinate CRY2." evidence="5 7 9 13 17 23 25 40">
    <original>C</original>
    <variation>A</variation>
    <location>
        <position position="223"/>
    </location>
</feature>
<feature type="mutagenesis site" description="Catalytically inactive mutant. No effect on p53/TP53 and PTEN binding but is defective in deubiquitinating p53/TP53 and PTEN. Partial loss of KMT2E/mml5 deubiquitination. Decreases deubiquitinase activity toward 'Lys-48'-polyubiquitinated ALKBH3. Reduced deubiquitination of REST. Reduced deubiquitination of TRIM27 and WASHC1." evidence="5 7 9 13 17 22 23 25 35 37 38 41">
    <original>C</original>
    <variation>S</variation>
    <location>
        <position position="223"/>
    </location>
</feature>
<feature type="mutagenesis site" description="Complete loss of activity." evidence="7">
    <original>H</original>
    <variation>A</variation>
    <location>
        <position position="456"/>
    </location>
</feature>
<feature type="mutagenesis site" description="Complete loss of activity." evidence="7">
    <original>H</original>
    <variation>A</variation>
    <location>
        <position position="464"/>
    </location>
</feature>
<feature type="sequence conflict" description="In Ref. 1; AA sequence." evidence="51" ref="1">
    <original>H</original>
    <variation>I</variation>
    <location>
        <position position="201"/>
    </location>
</feature>
<feature type="sequence conflict" description="In Ref. 1; AA sequence." evidence="51" ref="1">
    <original>W</original>
    <variation>P</variation>
    <location>
        <position position="205"/>
    </location>
</feature>
<feature type="sequence conflict" description="In Ref. 1; AA sequence." evidence="51" ref="1">
    <original>S</original>
    <variation>Q</variation>
    <location>
        <position position="207"/>
    </location>
</feature>
<feature type="sequence conflict" description="In Ref. 1; CAA96580." evidence="51" ref="1">
    <original>M</original>
    <variation>T</variation>
    <location>
        <position position="1045"/>
    </location>
</feature>
<feature type="sequence conflict" description="In Ref. 1; AA sequence." evidence="51" ref="1">
    <original>Q</original>
    <variation>T</variation>
    <location>
        <position position="1066"/>
    </location>
</feature>
<feature type="strand" evidence="74">
    <location>
        <begin position="67"/>
        <end position="77"/>
    </location>
</feature>
<feature type="helix" evidence="74">
    <location>
        <begin position="78"/>
        <end position="80"/>
    </location>
</feature>
<feature type="strand" evidence="74">
    <location>
        <begin position="90"/>
        <end position="92"/>
    </location>
</feature>
<feature type="strand" evidence="74">
    <location>
        <begin position="95"/>
        <end position="105"/>
    </location>
</feature>
<feature type="strand" evidence="69">
    <location>
        <begin position="106"/>
        <end position="110"/>
    </location>
</feature>
<feature type="strand" evidence="74">
    <location>
        <begin position="113"/>
        <end position="122"/>
    </location>
</feature>
<feature type="strand" evidence="74">
    <location>
        <begin position="131"/>
        <end position="140"/>
    </location>
</feature>
<feature type="helix" evidence="74">
    <location>
        <begin position="146"/>
        <end position="148"/>
    </location>
</feature>
<feature type="strand" evidence="74">
    <location>
        <begin position="150"/>
        <end position="159"/>
    </location>
</feature>
<feature type="helix" evidence="70">
    <location>
        <begin position="160"/>
        <end position="162"/>
    </location>
</feature>
<feature type="strand" evidence="74">
    <location>
        <begin position="164"/>
        <end position="172"/>
    </location>
</feature>
<feature type="helix" evidence="74">
    <location>
        <begin position="173"/>
        <end position="176"/>
    </location>
</feature>
<feature type="turn" evidence="74">
    <location>
        <begin position="179"/>
        <end position="181"/>
    </location>
</feature>
<feature type="strand" evidence="71">
    <location>
        <begin position="182"/>
        <end position="185"/>
    </location>
</feature>
<feature type="strand" evidence="74">
    <location>
        <begin position="188"/>
        <end position="197"/>
    </location>
</feature>
<feature type="strand" evidence="74">
    <location>
        <begin position="201"/>
        <end position="203"/>
    </location>
</feature>
<feature type="turn" evidence="81">
    <location>
        <begin position="208"/>
        <end position="211"/>
    </location>
</feature>
<feature type="turn" evidence="68">
    <location>
        <begin position="221"/>
        <end position="224"/>
    </location>
</feature>
<feature type="helix" evidence="79">
    <location>
        <begin position="225"/>
        <end position="233"/>
    </location>
</feature>
<feature type="helix" evidence="79">
    <location>
        <begin position="236"/>
        <end position="243"/>
    </location>
</feature>
<feature type="strand" evidence="85">
    <location>
        <begin position="248"/>
        <end position="250"/>
    </location>
</feature>
<feature type="turn" evidence="79">
    <location>
        <begin position="252"/>
        <end position="254"/>
    </location>
</feature>
<feature type="helix" evidence="79">
    <location>
        <begin position="256"/>
        <end position="269"/>
    </location>
</feature>
<feature type="helix" evidence="79">
    <location>
        <begin position="277"/>
        <end position="283"/>
    </location>
</feature>
<feature type="helix" evidence="79">
    <location>
        <begin position="288"/>
        <end position="293"/>
    </location>
</feature>
<feature type="helix" evidence="79">
    <location>
        <begin position="296"/>
        <end position="311"/>
    </location>
</feature>
<feature type="turn" evidence="79">
    <location>
        <begin position="315"/>
        <end position="318"/>
    </location>
</feature>
<feature type="helix" evidence="79">
    <location>
        <begin position="319"/>
        <end position="324"/>
    </location>
</feature>
<feature type="strand" evidence="79">
    <location>
        <begin position="326"/>
        <end position="338"/>
    </location>
</feature>
<feature type="strand" evidence="79">
    <location>
        <begin position="340"/>
        <end position="348"/>
    </location>
</feature>
<feature type="strand" evidence="79">
    <location>
        <begin position="350"/>
        <end position="353"/>
    </location>
</feature>
<feature type="helix" evidence="79">
    <location>
        <begin position="360"/>
        <end position="367"/>
    </location>
</feature>
<feature type="strand" evidence="79">
    <location>
        <begin position="371"/>
        <end position="373"/>
    </location>
</feature>
<feature type="helix" evidence="79">
    <location>
        <begin position="375"/>
        <end position="377"/>
    </location>
</feature>
<feature type="helix" evidence="79">
    <location>
        <begin position="382"/>
        <end position="384"/>
    </location>
</feature>
<feature type="strand" evidence="78">
    <location>
        <begin position="385"/>
        <end position="387"/>
    </location>
</feature>
<feature type="strand" evidence="79">
    <location>
        <begin position="389"/>
        <end position="396"/>
    </location>
</feature>
<feature type="strand" evidence="79">
    <location>
        <begin position="400"/>
        <end position="407"/>
    </location>
</feature>
<feature type="strand" evidence="79">
    <location>
        <begin position="409"/>
        <end position="411"/>
    </location>
</feature>
<feature type="turn" evidence="79">
    <location>
        <begin position="413"/>
        <end position="415"/>
    </location>
</feature>
<feature type="strand" evidence="79">
    <location>
        <begin position="418"/>
        <end position="420"/>
    </location>
</feature>
<feature type="strand" evidence="79">
    <location>
        <begin position="429"/>
        <end position="432"/>
    </location>
</feature>
<feature type="helix" evidence="79">
    <location>
        <begin position="434"/>
        <end position="436"/>
    </location>
</feature>
<feature type="strand" evidence="79">
    <location>
        <begin position="437"/>
        <end position="439"/>
    </location>
</feature>
<feature type="strand" evidence="82">
    <location>
        <begin position="442"/>
        <end position="444"/>
    </location>
</feature>
<feature type="strand" evidence="79">
    <location>
        <begin position="447"/>
        <end position="457"/>
    </location>
</feature>
<feature type="strand" evidence="79">
    <location>
        <begin position="459"/>
        <end position="461"/>
    </location>
</feature>
<feature type="strand" evidence="79">
    <location>
        <begin position="463"/>
        <end position="469"/>
    </location>
</feature>
<feature type="strand" evidence="79">
    <location>
        <begin position="473"/>
        <end position="475"/>
    </location>
</feature>
<feature type="strand" evidence="79">
    <location>
        <begin position="478"/>
        <end position="481"/>
    </location>
</feature>
<feature type="strand" evidence="79">
    <location>
        <begin position="484"/>
        <end position="487"/>
    </location>
</feature>
<feature type="helix" evidence="79">
    <location>
        <begin position="490"/>
        <end position="493"/>
    </location>
</feature>
<feature type="helix" evidence="79">
    <location>
        <begin position="495"/>
        <end position="497"/>
    </location>
</feature>
<feature type="turn" evidence="80">
    <location>
        <begin position="502"/>
        <end position="506"/>
    </location>
</feature>
<feature type="helix" evidence="79">
    <location>
        <begin position="507"/>
        <end position="510"/>
    </location>
</feature>
<feature type="strand" evidence="79">
    <location>
        <begin position="511"/>
        <end position="520"/>
    </location>
</feature>
<feature type="helix" evidence="79">
    <location>
        <begin position="521"/>
        <end position="523"/>
    </location>
</feature>
<feature type="helix" evidence="79">
    <location>
        <begin position="524"/>
        <end position="527"/>
    </location>
</feature>
<feature type="helix" evidence="79">
    <location>
        <begin position="533"/>
        <end position="535"/>
    </location>
</feature>
<feature type="helix" evidence="79">
    <location>
        <begin position="538"/>
        <end position="547"/>
    </location>
</feature>
<feature type="turn" evidence="83">
    <location>
        <begin position="551"/>
        <end position="555"/>
    </location>
</feature>
<feature type="helix" evidence="83">
    <location>
        <begin position="556"/>
        <end position="560"/>
    </location>
</feature>
<feature type="helix" evidence="84">
    <location>
        <begin position="561"/>
        <end position="563"/>
    </location>
</feature>
<feature type="strand" evidence="77">
    <location>
        <begin position="564"/>
        <end position="570"/>
    </location>
</feature>
<feature type="helix" evidence="77">
    <location>
        <begin position="572"/>
        <end position="574"/>
    </location>
</feature>
<feature type="turn" evidence="77">
    <location>
        <begin position="575"/>
        <end position="577"/>
    </location>
</feature>
<feature type="strand" evidence="77">
    <location>
        <begin position="580"/>
        <end position="584"/>
    </location>
</feature>
<feature type="strand" evidence="77">
    <location>
        <begin position="588"/>
        <end position="597"/>
    </location>
</feature>
<feature type="helix" evidence="77">
    <location>
        <begin position="602"/>
        <end position="613"/>
    </location>
</feature>
<feature type="helix" evidence="77">
    <location>
        <begin position="617"/>
        <end position="619"/>
    </location>
</feature>
<feature type="strand" evidence="77">
    <location>
        <begin position="620"/>
        <end position="628"/>
    </location>
</feature>
<feature type="turn" evidence="76">
    <location>
        <begin position="629"/>
        <end position="631"/>
    </location>
</feature>
<feature type="strand" evidence="77">
    <location>
        <begin position="633"/>
        <end position="635"/>
    </location>
</feature>
<feature type="helix" evidence="84">
    <location>
        <begin position="640"/>
        <end position="643"/>
    </location>
</feature>
<feature type="strand" evidence="77">
    <location>
        <begin position="645"/>
        <end position="647"/>
    </location>
</feature>
<feature type="helix" evidence="77">
    <location>
        <begin position="648"/>
        <end position="651"/>
    </location>
</feature>
<feature type="turn" evidence="77">
    <location>
        <begin position="652"/>
        <end position="654"/>
    </location>
</feature>
<feature type="strand" evidence="77">
    <location>
        <begin position="656"/>
        <end position="664"/>
    </location>
</feature>
<feature type="helix" evidence="84">
    <location>
        <begin position="667"/>
        <end position="671"/>
    </location>
</feature>
<feature type="turn" evidence="77">
    <location>
        <begin position="681"/>
        <end position="683"/>
    </location>
</feature>
<feature type="strand" evidence="77">
    <location>
        <begin position="684"/>
        <end position="693"/>
    </location>
</feature>
<feature type="turn" evidence="77">
    <location>
        <begin position="694"/>
        <end position="697"/>
    </location>
</feature>
<feature type="strand" evidence="77">
    <location>
        <begin position="698"/>
        <end position="708"/>
    </location>
</feature>
<feature type="helix" evidence="77">
    <location>
        <begin position="714"/>
        <end position="716"/>
    </location>
</feature>
<feature type="helix" evidence="77">
    <location>
        <begin position="717"/>
        <end position="724"/>
    </location>
</feature>
<feature type="strand" evidence="77">
    <location>
        <begin position="732"/>
        <end position="739"/>
    </location>
</feature>
<feature type="strand" evidence="77">
    <location>
        <begin position="742"/>
        <end position="745"/>
    </location>
</feature>
<feature type="strand" evidence="72">
    <location>
        <begin position="749"/>
        <end position="752"/>
    </location>
</feature>
<feature type="helix" evidence="77">
    <location>
        <begin position="753"/>
        <end position="756"/>
    </location>
</feature>
<feature type="strand" evidence="76">
    <location>
        <begin position="757"/>
        <end position="759"/>
    </location>
</feature>
<feature type="strand" evidence="77">
    <location>
        <begin position="764"/>
        <end position="770"/>
    </location>
</feature>
<feature type="helix" evidence="77">
    <location>
        <begin position="773"/>
        <end position="777"/>
    </location>
</feature>
<feature type="strand" evidence="77">
    <location>
        <begin position="778"/>
        <end position="780"/>
    </location>
</feature>
<feature type="helix" evidence="77">
    <location>
        <begin position="783"/>
        <end position="792"/>
    </location>
</feature>
<feature type="strand" evidence="77">
    <location>
        <begin position="793"/>
        <end position="800"/>
    </location>
</feature>
<feature type="strand" evidence="75">
    <location>
        <begin position="803"/>
        <end position="805"/>
    </location>
</feature>
<feature type="strand" evidence="77">
    <location>
        <begin position="809"/>
        <end position="814"/>
    </location>
</feature>
<feature type="helix" evidence="77">
    <location>
        <begin position="819"/>
        <end position="829"/>
    </location>
</feature>
<feature type="helix" evidence="77">
    <location>
        <begin position="834"/>
        <end position="836"/>
    </location>
</feature>
<feature type="strand" evidence="77">
    <location>
        <begin position="837"/>
        <end position="840"/>
    </location>
</feature>
<feature type="strand" evidence="77">
    <location>
        <begin position="846"/>
        <end position="848"/>
    </location>
</feature>
<feature type="helix" evidence="77">
    <location>
        <begin position="861"/>
        <end position="865"/>
    </location>
</feature>
<feature type="strand" evidence="78">
    <location>
        <begin position="866"/>
        <end position="868"/>
    </location>
</feature>
<feature type="strand" evidence="77">
    <location>
        <begin position="870"/>
        <end position="872"/>
    </location>
</feature>
<feature type="strand" evidence="77">
    <location>
        <begin position="875"/>
        <end position="880"/>
    </location>
</feature>
<feature type="helix" evidence="84">
    <location>
        <begin position="885"/>
        <end position="890"/>
    </location>
</feature>
<feature type="strand" evidence="84">
    <location>
        <begin position="894"/>
        <end position="899"/>
    </location>
</feature>
<feature type="strand" evidence="84">
    <location>
        <begin position="905"/>
        <end position="910"/>
    </location>
</feature>
<feature type="helix" evidence="84">
    <location>
        <begin position="918"/>
        <end position="926"/>
    </location>
</feature>
<feature type="strand" evidence="73">
    <location>
        <begin position="933"/>
        <end position="935"/>
    </location>
</feature>
<feature type="strand" evidence="84">
    <location>
        <begin position="939"/>
        <end position="945"/>
    </location>
</feature>
<feature type="strand" evidence="84">
    <location>
        <begin position="948"/>
        <end position="953"/>
    </location>
</feature>
<feature type="helix" evidence="84">
    <location>
        <begin position="959"/>
        <end position="961"/>
    </location>
</feature>
<feature type="strand" evidence="86">
    <location>
        <begin position="965"/>
        <end position="967"/>
    </location>
</feature>
<feature type="strand" evidence="84">
    <location>
        <begin position="969"/>
        <end position="974"/>
    </location>
</feature>
<feature type="helix" evidence="84">
    <location>
        <begin position="977"/>
        <end position="979"/>
    </location>
</feature>
<feature type="turn" evidence="84">
    <location>
        <begin position="984"/>
        <end position="986"/>
    </location>
</feature>
<feature type="strand" evidence="84">
    <location>
        <begin position="987"/>
        <end position="998"/>
    </location>
</feature>
<feature type="strand" evidence="84">
    <location>
        <begin position="1001"/>
        <end position="1012"/>
    </location>
</feature>
<feature type="helix" evidence="84">
    <location>
        <begin position="1017"/>
        <end position="1028"/>
    </location>
</feature>
<feature type="helix" evidence="84">
    <location>
        <begin position="1032"/>
        <end position="1037"/>
    </location>
</feature>
<feature type="strand" evidence="84">
    <location>
        <begin position="1039"/>
        <end position="1044"/>
    </location>
</feature>
<feature type="strand" evidence="84">
    <location>
        <begin position="1047"/>
        <end position="1050"/>
    </location>
</feature>
<feature type="turn" evidence="84">
    <location>
        <begin position="1053"/>
        <end position="1055"/>
    </location>
</feature>
<feature type="helix" evidence="84">
    <location>
        <begin position="1060"/>
        <end position="1062"/>
    </location>
</feature>
<feature type="strand" evidence="84">
    <location>
        <begin position="1070"/>
        <end position="1072"/>
    </location>
</feature>
<feature type="strand" evidence="84">
    <location>
        <begin position="1076"/>
        <end position="1080"/>
    </location>
</feature>
<keyword id="KW-0002">3D-structure</keyword>
<keyword id="KW-0007">Acetylation</keyword>
<keyword id="KW-0025">Alternative splicing</keyword>
<keyword id="KW-1268">Autism spectrum disorder</keyword>
<keyword id="KW-0090">Biological rhythms</keyword>
<keyword id="KW-0158">Chromosome</keyword>
<keyword id="KW-0963">Cytoplasm</keyword>
<keyword id="KW-0217">Developmental protein</keyword>
<keyword id="KW-0903">Direct protein sequencing</keyword>
<keyword id="KW-0225">Disease variant</keyword>
<keyword id="KW-0227">DNA damage</keyword>
<keyword id="KW-0234">DNA repair</keyword>
<keyword id="KW-0887">Epilepsy</keyword>
<keyword id="KW-0945">Host-virus interaction</keyword>
<keyword id="KW-0378">Hydrolase</keyword>
<keyword id="KW-0991">Intellectual disability</keyword>
<keyword id="KW-1017">Isopeptide bond</keyword>
<keyword id="KW-0539">Nucleus</keyword>
<keyword id="KW-0597">Phosphoprotein</keyword>
<keyword id="KW-0645">Protease</keyword>
<keyword id="KW-1267">Proteomics identification</keyword>
<keyword id="KW-1185">Reference proteome</keyword>
<keyword id="KW-0788">Thiol protease</keyword>
<keyword id="KW-0832">Ubl conjugation</keyword>
<keyword id="KW-0833">Ubl conjugation pathway</keyword>
<gene>
    <name evidence="48 59" type="primary">USP7</name>
    <name evidence="50" type="synonym">HAUSP</name>
</gene>
<reference key="1">
    <citation type="journal article" date="1997" name="EMBO J.">
        <title>A novel ubiquitin-specific protease is dynamically associated with the PML nuclear domain and binds to a herpesvirus regulatory protein.</title>
        <authorList>
            <person name="Everett R.D."/>
            <person name="Meredith M."/>
            <person name="Orr A."/>
            <person name="Cross A."/>
            <person name="Kathoria M."/>
            <person name="Parkinson J."/>
        </authorList>
    </citation>
    <scope>NUCLEOTIDE SEQUENCE [MRNA] (ISOFORM 1)</scope>
    <scope>PARTIAL PROTEIN SEQUENCE</scope>
    <scope>CATALYTIC ACTIVITY</scope>
    <scope>SUBCELLULAR LOCATION</scope>
    <scope>INTERACTION WITH HERPESVIRUS 1 TRANS-ACTING TRANSCRIPTIONAL PROTEIN ICP0/VMW110</scope>
    <source>
        <tissue>Mammary cancer</tissue>
    </source>
</reference>
<reference key="2">
    <citation type="journal article" date="1997" name="EMBO J.">
        <authorList>
            <person name="Everett R.D."/>
            <person name="Meredith M."/>
            <person name="Orr A."/>
            <person name="Cross A."/>
            <person name="Kathoria M."/>
            <person name="Parkinson J."/>
        </authorList>
    </citation>
    <scope>ERRATUM OF PUBMED:9034339</scope>
</reference>
<reference key="3">
    <citation type="journal article" date="2004" name="Nat. Genet.">
        <title>Complete sequencing and characterization of 21,243 full-length human cDNAs.</title>
        <authorList>
            <person name="Ota T."/>
            <person name="Suzuki Y."/>
            <person name="Nishikawa T."/>
            <person name="Otsuki T."/>
            <person name="Sugiyama T."/>
            <person name="Irie R."/>
            <person name="Wakamatsu A."/>
            <person name="Hayashi K."/>
            <person name="Sato H."/>
            <person name="Nagai K."/>
            <person name="Kimura K."/>
            <person name="Makita H."/>
            <person name="Sekine M."/>
            <person name="Obayashi M."/>
            <person name="Nishi T."/>
            <person name="Shibahara T."/>
            <person name="Tanaka T."/>
            <person name="Ishii S."/>
            <person name="Yamamoto J."/>
            <person name="Saito K."/>
            <person name="Kawai Y."/>
            <person name="Isono Y."/>
            <person name="Nakamura Y."/>
            <person name="Nagahari K."/>
            <person name="Murakami K."/>
            <person name="Yasuda T."/>
            <person name="Iwayanagi T."/>
            <person name="Wagatsuma M."/>
            <person name="Shiratori A."/>
            <person name="Sudo H."/>
            <person name="Hosoiri T."/>
            <person name="Kaku Y."/>
            <person name="Kodaira H."/>
            <person name="Kondo H."/>
            <person name="Sugawara M."/>
            <person name="Takahashi M."/>
            <person name="Kanda K."/>
            <person name="Yokoi T."/>
            <person name="Furuya T."/>
            <person name="Kikkawa E."/>
            <person name="Omura Y."/>
            <person name="Abe K."/>
            <person name="Kamihara K."/>
            <person name="Katsuta N."/>
            <person name="Sato K."/>
            <person name="Tanikawa M."/>
            <person name="Yamazaki M."/>
            <person name="Ninomiya K."/>
            <person name="Ishibashi T."/>
            <person name="Yamashita H."/>
            <person name="Murakawa K."/>
            <person name="Fujimori K."/>
            <person name="Tanai H."/>
            <person name="Kimata M."/>
            <person name="Watanabe M."/>
            <person name="Hiraoka S."/>
            <person name="Chiba Y."/>
            <person name="Ishida S."/>
            <person name="Ono Y."/>
            <person name="Takiguchi S."/>
            <person name="Watanabe S."/>
            <person name="Yosida M."/>
            <person name="Hotuta T."/>
            <person name="Kusano J."/>
            <person name="Kanehori K."/>
            <person name="Takahashi-Fujii A."/>
            <person name="Hara H."/>
            <person name="Tanase T.-O."/>
            <person name="Nomura Y."/>
            <person name="Togiya S."/>
            <person name="Komai F."/>
            <person name="Hara R."/>
            <person name="Takeuchi K."/>
            <person name="Arita M."/>
            <person name="Imose N."/>
            <person name="Musashino K."/>
            <person name="Yuuki H."/>
            <person name="Oshima A."/>
            <person name="Sasaki N."/>
            <person name="Aotsuka S."/>
            <person name="Yoshikawa Y."/>
            <person name="Matsunawa H."/>
            <person name="Ichihara T."/>
            <person name="Shiohata N."/>
            <person name="Sano S."/>
            <person name="Moriya S."/>
            <person name="Momiyama H."/>
            <person name="Satoh N."/>
            <person name="Takami S."/>
            <person name="Terashima Y."/>
            <person name="Suzuki O."/>
            <person name="Nakagawa S."/>
            <person name="Senoh A."/>
            <person name="Mizoguchi H."/>
            <person name="Goto Y."/>
            <person name="Shimizu F."/>
            <person name="Wakebe H."/>
            <person name="Hishigaki H."/>
            <person name="Watanabe T."/>
            <person name="Sugiyama A."/>
            <person name="Takemoto M."/>
            <person name="Kawakami B."/>
            <person name="Yamazaki M."/>
            <person name="Watanabe K."/>
            <person name="Kumagai A."/>
            <person name="Itakura S."/>
            <person name="Fukuzumi Y."/>
            <person name="Fujimori Y."/>
            <person name="Komiyama M."/>
            <person name="Tashiro H."/>
            <person name="Tanigami A."/>
            <person name="Fujiwara T."/>
            <person name="Ono T."/>
            <person name="Yamada K."/>
            <person name="Fujii Y."/>
            <person name="Ozaki K."/>
            <person name="Hirao M."/>
            <person name="Ohmori Y."/>
            <person name="Kawabata A."/>
            <person name="Hikiji T."/>
            <person name="Kobatake N."/>
            <person name="Inagaki H."/>
            <person name="Ikema Y."/>
            <person name="Okamoto S."/>
            <person name="Okitani R."/>
            <person name="Kawakami T."/>
            <person name="Noguchi S."/>
            <person name="Itoh T."/>
            <person name="Shigeta K."/>
            <person name="Senba T."/>
            <person name="Matsumura K."/>
            <person name="Nakajima Y."/>
            <person name="Mizuno T."/>
            <person name="Morinaga M."/>
            <person name="Sasaki M."/>
            <person name="Togashi T."/>
            <person name="Oyama M."/>
            <person name="Hata H."/>
            <person name="Watanabe M."/>
            <person name="Komatsu T."/>
            <person name="Mizushima-Sugano J."/>
            <person name="Satoh T."/>
            <person name="Shirai Y."/>
            <person name="Takahashi Y."/>
            <person name="Nakagawa K."/>
            <person name="Okumura K."/>
            <person name="Nagase T."/>
            <person name="Nomura N."/>
            <person name="Kikuchi H."/>
            <person name="Masuho Y."/>
            <person name="Yamashita R."/>
            <person name="Nakai K."/>
            <person name="Yada T."/>
            <person name="Nakamura Y."/>
            <person name="Ohara O."/>
            <person name="Isogai T."/>
            <person name="Sugano S."/>
        </authorList>
    </citation>
    <scope>NUCLEOTIDE SEQUENCE [LARGE SCALE MRNA] (ISOFORM 3)</scope>
    <source>
        <tissue>Testis</tissue>
    </source>
</reference>
<reference key="4">
    <citation type="journal article" date="2004" name="Nature">
        <title>The sequence and analysis of duplication-rich human chromosome 16.</title>
        <authorList>
            <person name="Martin J."/>
            <person name="Han C."/>
            <person name="Gordon L.A."/>
            <person name="Terry A."/>
            <person name="Prabhakar S."/>
            <person name="She X."/>
            <person name="Xie G."/>
            <person name="Hellsten U."/>
            <person name="Chan Y.M."/>
            <person name="Altherr M."/>
            <person name="Couronne O."/>
            <person name="Aerts A."/>
            <person name="Bajorek E."/>
            <person name="Black S."/>
            <person name="Blumer H."/>
            <person name="Branscomb E."/>
            <person name="Brown N.C."/>
            <person name="Bruno W.J."/>
            <person name="Buckingham J.M."/>
            <person name="Callen D.F."/>
            <person name="Campbell C.S."/>
            <person name="Campbell M.L."/>
            <person name="Campbell E.W."/>
            <person name="Caoile C."/>
            <person name="Challacombe J.F."/>
            <person name="Chasteen L.A."/>
            <person name="Chertkov O."/>
            <person name="Chi H.C."/>
            <person name="Christensen M."/>
            <person name="Clark L.M."/>
            <person name="Cohn J.D."/>
            <person name="Denys M."/>
            <person name="Detter J.C."/>
            <person name="Dickson M."/>
            <person name="Dimitrijevic-Bussod M."/>
            <person name="Escobar J."/>
            <person name="Fawcett J.J."/>
            <person name="Flowers D."/>
            <person name="Fotopulos D."/>
            <person name="Glavina T."/>
            <person name="Gomez M."/>
            <person name="Gonzales E."/>
            <person name="Goodstein D."/>
            <person name="Goodwin L.A."/>
            <person name="Grady D.L."/>
            <person name="Grigoriev I."/>
            <person name="Groza M."/>
            <person name="Hammon N."/>
            <person name="Hawkins T."/>
            <person name="Haydu L."/>
            <person name="Hildebrand C.E."/>
            <person name="Huang W."/>
            <person name="Israni S."/>
            <person name="Jett J."/>
            <person name="Jewett P.B."/>
            <person name="Kadner K."/>
            <person name="Kimball H."/>
            <person name="Kobayashi A."/>
            <person name="Krawczyk M.-C."/>
            <person name="Leyba T."/>
            <person name="Longmire J.L."/>
            <person name="Lopez F."/>
            <person name="Lou Y."/>
            <person name="Lowry S."/>
            <person name="Ludeman T."/>
            <person name="Manohar C.F."/>
            <person name="Mark G.A."/>
            <person name="McMurray K.L."/>
            <person name="Meincke L.J."/>
            <person name="Morgan J."/>
            <person name="Moyzis R.K."/>
            <person name="Mundt M.O."/>
            <person name="Munk A.C."/>
            <person name="Nandkeshwar R.D."/>
            <person name="Pitluck S."/>
            <person name="Pollard M."/>
            <person name="Predki P."/>
            <person name="Parson-Quintana B."/>
            <person name="Ramirez L."/>
            <person name="Rash S."/>
            <person name="Retterer J."/>
            <person name="Ricke D.O."/>
            <person name="Robinson D.L."/>
            <person name="Rodriguez A."/>
            <person name="Salamov A."/>
            <person name="Saunders E.H."/>
            <person name="Scott D."/>
            <person name="Shough T."/>
            <person name="Stallings R.L."/>
            <person name="Stalvey M."/>
            <person name="Sutherland R.D."/>
            <person name="Tapia R."/>
            <person name="Tesmer J.G."/>
            <person name="Thayer N."/>
            <person name="Thompson L.S."/>
            <person name="Tice H."/>
            <person name="Torney D.C."/>
            <person name="Tran-Gyamfi M."/>
            <person name="Tsai M."/>
            <person name="Ulanovsky L.E."/>
            <person name="Ustaszewska A."/>
            <person name="Vo N."/>
            <person name="White P.S."/>
            <person name="Williams A.L."/>
            <person name="Wills P.L."/>
            <person name="Wu J.-R."/>
            <person name="Wu K."/>
            <person name="Yang J."/>
            <person name="DeJong P."/>
            <person name="Bruce D."/>
            <person name="Doggett N.A."/>
            <person name="Deaven L."/>
            <person name="Schmutz J."/>
            <person name="Grimwood J."/>
            <person name="Richardson P."/>
            <person name="Rokhsar D.S."/>
            <person name="Eichler E.E."/>
            <person name="Gilna P."/>
            <person name="Lucas S.M."/>
            <person name="Myers R.M."/>
            <person name="Rubin E.M."/>
            <person name="Pennacchio L.A."/>
        </authorList>
    </citation>
    <scope>NUCLEOTIDE SEQUENCE [LARGE SCALE GENOMIC DNA]</scope>
</reference>
<reference key="5">
    <citation type="submission" date="2005-09" db="EMBL/GenBank/DDBJ databases">
        <authorList>
            <person name="Mural R.J."/>
            <person name="Istrail S."/>
            <person name="Sutton G.G."/>
            <person name="Florea L."/>
            <person name="Halpern A.L."/>
            <person name="Mobarry C.M."/>
            <person name="Lippert R."/>
            <person name="Walenz B."/>
            <person name="Shatkay H."/>
            <person name="Dew I."/>
            <person name="Miller J.R."/>
            <person name="Flanigan M.J."/>
            <person name="Edwards N.J."/>
            <person name="Bolanos R."/>
            <person name="Fasulo D."/>
            <person name="Halldorsson B.V."/>
            <person name="Hannenhalli S."/>
            <person name="Turner R."/>
            <person name="Yooseph S."/>
            <person name="Lu F."/>
            <person name="Nusskern D.R."/>
            <person name="Shue B.C."/>
            <person name="Zheng X.H."/>
            <person name="Zhong F."/>
            <person name="Delcher A.L."/>
            <person name="Huson D.H."/>
            <person name="Kravitz S.A."/>
            <person name="Mouchard L."/>
            <person name="Reinert K."/>
            <person name="Remington K.A."/>
            <person name="Clark A.G."/>
            <person name="Waterman M.S."/>
            <person name="Eichler E.E."/>
            <person name="Adams M.D."/>
            <person name="Hunkapiller M.W."/>
            <person name="Myers E.W."/>
            <person name="Venter J.C."/>
        </authorList>
    </citation>
    <scope>NUCLEOTIDE SEQUENCE [LARGE SCALE GENOMIC DNA]</scope>
</reference>
<reference key="6">
    <citation type="journal article" date="2002" name="Mol. Cell. Neurosci.">
        <title>USP7, a ubiquitin-specific protease, interacts with ataxin-1, the SCA1 gene product.</title>
        <authorList>
            <person name="Hong S."/>
            <person name="Kim S.J."/>
            <person name="Ka S."/>
            <person name="Choi I."/>
            <person name="Kang S."/>
        </authorList>
    </citation>
    <scope>NUCLEOTIDE SEQUENCE [MRNA] OF 705-1102 (ISOFORM 1)</scope>
    <scope>SUBCELLULAR LOCATION</scope>
    <scope>INTERACTION WITH ATXN1</scope>
</reference>
<reference key="7">
    <citation type="journal article" date="2002" name="Nature">
        <title>Deubiquitination of p53 by HAUSP is an important pathway for p53 stabilization.</title>
        <authorList>
            <person name="Li M."/>
            <person name="Chen D."/>
            <person name="Shiloh A."/>
            <person name="Luo J."/>
            <person name="Nikolaev A.Y."/>
            <person name="Qin J."/>
            <person name="Gu W."/>
        </authorList>
    </citation>
    <scope>FUNCTION</scope>
    <scope>CATALYTIC ACTIVITY</scope>
    <scope>INTERACTION WITH TP53</scope>
    <scope>MUTAGENESIS OF CYS-223</scope>
    <scope>ACTIVE SITE</scope>
</reference>
<reference key="8">
    <citation type="journal article" date="2003" name="J. Biol. Chem.">
        <title>Protein interaction domains of the ubiquitin-specific protease, USP7/HAUSP.</title>
        <authorList>
            <person name="Holowaty M.N."/>
            <person name="Sheng Y."/>
            <person name="Nguyen T."/>
            <person name="Arrowsmith C."/>
            <person name="Frappier L."/>
        </authorList>
    </citation>
    <scope>FUNCTION (MICROBIAL INFECTION)</scope>
    <scope>SUBUNIT</scope>
    <scope>BIOPHYSICOCHEMICAL PROPERTIES</scope>
    <scope>ACTIVITY REGULATION</scope>
    <scope>INTERACTION WITH HERPESVIRUS 1 TRANS-ACTING TRANSCRIPTIONAL PROTEIN ICP0/VMW110 AND EBV EBNA1 (MICROBIAL INFECTION)</scope>
    <scope>REGION</scope>
</reference>
<reference key="9">
    <citation type="journal article" date="2004" name="Mol. Cell">
        <title>A dynamic role of HAUSP in the p53-Mdm2 pathway.</title>
        <authorList>
            <person name="Li M."/>
            <person name="Brooks C.L."/>
            <person name="Kon N."/>
            <person name="Gu W."/>
        </authorList>
    </citation>
    <scope>FUNCTION</scope>
    <scope>CATALYTIC ACTIVITY</scope>
    <scope>INTERACTION WITH MDM2</scope>
    <scope>MUTAGENESIS OF CYS-223</scope>
    <scope>ACTIVE SITE</scope>
</reference>
<reference key="10">
    <citation type="journal article" date="2005" name="J. Virol.">
        <title>Reciprocal activities between herpes simplex virus type 1 regulatory protein ICP0, a ubiquitin E3 ligase, and ubiquitin-specific protease USP7.</title>
        <authorList>
            <person name="Boutell C."/>
            <person name="Canning M."/>
            <person name="Orr A."/>
            <person name="Everett R.D."/>
        </authorList>
    </citation>
    <scope>FUNCTION (MICROBIAL INFECTION)</scope>
    <scope>UBIQUITINATION</scope>
    <scope>INTERACTION WITH HERPESVIRUS 1 TRANS-ACTING TRANSCRIPTIONAL PROTEIN ICP0/VMW110 (MICROBIAL INFECTION)</scope>
</reference>
<reference key="11">
    <citation type="journal article" date="2006" name="Nat. Cell Biol.">
        <title>Critical role for Daxx in regulating Mdm2.</title>
        <authorList>
            <person name="Tang J."/>
            <person name="Qu L.K."/>
            <person name="Zhang J."/>
            <person name="Wang W."/>
            <person name="Michaelson J.S."/>
            <person name="Degenhardt Y.Y."/>
            <person name="El-Deiry W.S."/>
            <person name="Yang X."/>
        </authorList>
    </citation>
    <scope>FUNCTION</scope>
    <scope>IDENTIFICATION IN A COMPLEX WITH DAXX AND MDM2</scope>
    <scope>INTERACTION WITH DAXX</scope>
    <scope>SUBCELLULAR LOCATION</scope>
</reference>
<reference key="12">
    <citation type="journal article" date="2006" name="Nat. Cell Biol.">
        <title>FOXO4 transcriptional activity is regulated by monoubiquitination and USP7/HAUSP.</title>
        <authorList>
            <person name="van der Horst A."/>
            <person name="de Vries-Smits A.M."/>
            <person name="Brenkman A.B."/>
            <person name="van Triest M.H."/>
            <person name="van den Broek N."/>
            <person name="Colland F."/>
            <person name="Maurice M.M."/>
            <person name="Burgering B.M."/>
        </authorList>
    </citation>
    <scope>FUNCTION</scope>
    <scope>INTERACTION WITH FOXO4</scope>
    <scope>MUTAGENESIS OF CYS-223</scope>
    <scope>CATALYTIC ACTIVITY</scope>
</reference>
<reference key="13">
    <citation type="journal article" date="2007" name="FEBS J.">
        <title>Biochemical characterization of USP7 reveals post-translational modification sites and structural requirements for substrate processing and subcellular localization.</title>
        <authorList>
            <person name="Fernandez-Montalvan A."/>
            <person name="Bouwmeester T."/>
            <person name="Joberty G."/>
            <person name="Mader R."/>
            <person name="Mahnke M."/>
            <person name="Pierrat B."/>
            <person name="Schlaeppi J.M."/>
            <person name="Worpenberg S."/>
            <person name="Gerhartz B."/>
        </authorList>
    </citation>
    <scope>SUBUNIT</scope>
    <scope>PHOSPHORYLATION AT SER-18 AND SER-963</scope>
    <scope>UBIQUITINATION AT LYS-869</scope>
    <scope>SUBCELLULAR LOCATION</scope>
    <scope>IDENTIFICATION BY MASS SPECTROMETRY</scope>
</reference>
<reference key="14">
    <citation type="journal article" date="2008" name="EMBO J.">
        <title>The tumour suppressor RASSF1A promotes MDM2 self-ubiquitination by disrupting the MDM2-DAXX-HAUSP complex.</title>
        <authorList>
            <person name="Song M.S."/>
            <person name="Song S.J."/>
            <person name="Kim S.Y."/>
            <person name="Oh H.J."/>
            <person name="Lim D.S."/>
        </authorList>
    </citation>
    <scope>FUNCTION</scope>
    <scope>IDENTIFICATION IN A COMPLEX WITH DAXX; RASSF1 AND MDM2</scope>
    <scope>INTERACTION WITH DAXX AND MDM2</scope>
</reference>
<reference key="15">
    <citation type="journal article" date="2008" name="Nature">
        <title>The deubiquitinylation and localization of PTEN are regulated by a HAUSP-PML network.</title>
        <authorList>
            <person name="Song M.S."/>
            <person name="Salmena L."/>
            <person name="Carracedo A."/>
            <person name="Egia A."/>
            <person name="Lo-Coco F."/>
            <person name="Teruya-Feldstein J."/>
            <person name="Pandolfi P.P."/>
        </authorList>
    </citation>
    <scope>FUNCTION</scope>
    <scope>CATALYTIC ACTIVITY</scope>
    <scope>INTERACTION WITH PTEN</scope>
    <scope>MUTAGENESIS OF CYS-223</scope>
    <scope>SUBCELLULAR LOCATION</scope>
    <scope>TISSUE SPECIFICITY</scope>
</reference>
<reference key="16">
    <citation type="journal article" date="2008" name="Proc. Natl. Acad. Sci. U.S.A.">
        <title>A quantitative atlas of mitotic phosphorylation.</title>
        <authorList>
            <person name="Dephoure N."/>
            <person name="Zhou C."/>
            <person name="Villen J."/>
            <person name="Beausoleil S.A."/>
            <person name="Bakalarski C.E."/>
            <person name="Elledge S.J."/>
            <person name="Gygi S.P."/>
        </authorList>
    </citation>
    <scope>PHOSPHORYLATION [LARGE SCALE ANALYSIS] AT SER-18 AND SER-963</scope>
    <scope>IDENTIFICATION BY MASS SPECTROMETRY [LARGE SCALE ANALYSIS]</scope>
    <source>
        <tissue>Cervix carcinoma</tissue>
    </source>
</reference>
<reference key="17">
    <citation type="journal article" date="2008" name="Virus Res.">
        <title>Identification of a novel higher molecular weight isoform of USP7/HAUSP that interacts with the Herpes simplex virus type-1 immediate early protein ICP0.</title>
        <authorList>
            <person name="Antrobus R."/>
            <person name="Boutell C."/>
        </authorList>
    </citation>
    <scope>FUNCTION (MICROBIAL INFECTION)</scope>
    <scope>INTERACTION WITH HERPESVIRUS 1 TRANS-ACTING TRANSCRIPTIONAL PROTEIN ICP0/VMW110 (MICROBIAL INFECTION)</scope>
    <scope>SUBCELLULAR LOCATION</scope>
    <scope>IDENTIFICATION BY MASS SPECTROMETRY</scope>
    <scope>ALTERNATIVE SPLICING (ISOFORM 2)</scope>
</reference>
<reference key="18">
    <citation type="journal article" date="2009" name="Anal. Chem.">
        <title>Lys-N and trypsin cover complementary parts of the phosphoproteome in a refined SCX-based approach.</title>
        <authorList>
            <person name="Gauci S."/>
            <person name="Helbig A.O."/>
            <person name="Slijper M."/>
            <person name="Krijgsveld J."/>
            <person name="Heck A.J."/>
            <person name="Mohammed S."/>
        </authorList>
    </citation>
    <scope>IDENTIFICATION BY MASS SPECTROMETRY [LARGE SCALE ANALYSIS]</scope>
</reference>
<reference key="19">
    <citation type="journal article" date="2009" name="Science">
        <title>Lysine acetylation targets protein complexes and co-regulates major cellular functions.</title>
        <authorList>
            <person name="Choudhary C."/>
            <person name="Kumar C."/>
            <person name="Gnad F."/>
            <person name="Nielsen M.L."/>
            <person name="Rehman M."/>
            <person name="Walther T.C."/>
            <person name="Olsen J.V."/>
            <person name="Mann M."/>
        </authorList>
    </citation>
    <scope>ACETYLATION [LARGE SCALE ANALYSIS] AT LYS-869; LYS-1084 AND LYS-1096</scope>
    <scope>IDENTIFICATION BY MASS SPECTROMETRY [LARGE SCALE ANALYSIS]</scope>
</reference>
<reference key="20">
    <citation type="journal article" date="2010" name="Biochem. Biophys. Res. Commun.">
        <title>Daxx is reciprocally regulated by Mdm2 and Hausp.</title>
        <authorList>
            <person name="Tang J."/>
            <person name="Qu L."/>
            <person name="Pang M."/>
            <person name="Yang X."/>
        </authorList>
    </citation>
    <scope>FUNCTION</scope>
</reference>
<reference key="21">
    <citation type="journal article" date="2010" name="EMBO J.">
        <title>Ubiquitin-specific proteases 7 and 11 modulate Polycomb regulation of the INK4a tumour suppressor.</title>
        <authorList>
            <person name="Maertens G.N."/>
            <person name="El Messaoudi-Aubert S."/>
            <person name="Elderkin S."/>
            <person name="Hiom K."/>
            <person name="Peters G."/>
        </authorList>
    </citation>
    <scope>FUNCTION</scope>
    <scope>SUBCELLULAR LOCATION</scope>
    <scope>INTERACTION WITH THE PRC1-LIKE COMPLEX</scope>
</reference>
<reference key="22">
    <citation type="journal article" date="2010" name="J. Virol.">
        <title>Epstein-Barr virus nuclear antigen 1 Hijacks the host kinase CK2 to disrupt PML nuclear bodies.</title>
        <authorList>
            <person name="Sivachandran N."/>
            <person name="Cao J.Y."/>
            <person name="Frappier L."/>
        </authorList>
    </citation>
    <scope>FUNCTION (MICROBIAL INFECTION)</scope>
    <scope>INTERACTION WITH EPSTEIN-BARR VIRUS EBNA1 (MICROBIAL INFECTION)</scope>
</reference>
<reference key="23">
    <citation type="journal article" date="2010" name="Sci. Signal.">
        <title>Quantitative phosphoproteomics reveals widespread full phosphorylation site occupancy during mitosis.</title>
        <authorList>
            <person name="Olsen J.V."/>
            <person name="Vermeulen M."/>
            <person name="Santamaria A."/>
            <person name="Kumar C."/>
            <person name="Miller M.L."/>
            <person name="Jensen L.J."/>
            <person name="Gnad F."/>
            <person name="Cox J."/>
            <person name="Jensen T.S."/>
            <person name="Nigg E.A."/>
            <person name="Brunak S."/>
            <person name="Mann M."/>
        </authorList>
    </citation>
    <scope>PHOSPHORYLATION [LARGE SCALE ANALYSIS] AT SER-18</scope>
    <scope>IDENTIFICATION BY MASS SPECTROMETRY [LARGE SCALE ANALYSIS]</scope>
    <source>
        <tissue>Cervix carcinoma</tissue>
    </source>
</reference>
<reference key="24">
    <citation type="journal article" date="2011" name="BMC Syst. Biol.">
        <title>Initial characterization of the human central proteome.</title>
        <authorList>
            <person name="Burkard T.R."/>
            <person name="Planyavsky M."/>
            <person name="Kaupe I."/>
            <person name="Breitwieser F.P."/>
            <person name="Buerckstuemmer T."/>
            <person name="Bennett K.L."/>
            <person name="Superti-Furga G."/>
            <person name="Colinge J."/>
        </authorList>
    </citation>
    <scope>IDENTIFICATION BY MASS SPECTROMETRY [LARGE SCALE ANALYSIS]</scope>
</reference>
<reference key="25">
    <citation type="journal article" date="2011" name="Nat. Cell Biol.">
        <title>TSPYL5 suppresses p53 levels and function by physical interaction with USP7.</title>
        <authorList>
            <person name="Epping M.T."/>
            <person name="Meijer L.A."/>
            <person name="Krijgsman O."/>
            <person name="Bos J.L."/>
            <person name="Pandolfi P.P."/>
            <person name="Bernards R."/>
        </authorList>
    </citation>
    <scope>INTERACTION WITH TSPYL5</scope>
</reference>
<reference key="26">
    <citation type="journal article" date="2011" name="Nat. Cell Biol.">
        <title>Deubiquitylase HAUSP stabilizes REST and promotes maintenance of neural progenitor cells.</title>
        <authorList>
            <person name="Huang Z."/>
            <person name="Wu Q."/>
            <person name="Guryanova O.A."/>
            <person name="Cheng L."/>
            <person name="Shou W."/>
            <person name="Rich J.N."/>
            <person name="Bao S."/>
        </authorList>
    </citation>
    <scope>FUNCTION</scope>
    <scope>INTERACTION WITH REST</scope>
    <scope>SUBCELLULAR LOCATION</scope>
    <scope>TISSUE SPECIFICITY</scope>
    <scope>INDUCTION</scope>
    <scope>MUTAGENESIS OF CYS-223</scope>
</reference>
<reference key="27">
    <citation type="journal article" date="2011" name="Nucleic Acids Res.">
        <title>The USP7/Dnmt1 complex stimulates the DNA methylation activity of Dnmt1 and regulates the stability of UHRF1.</title>
        <authorList>
            <person name="Felle M."/>
            <person name="Joppien S."/>
            <person name="Nemeth A."/>
            <person name="Diermeier S."/>
            <person name="Thalhammer V."/>
            <person name="Dobner T."/>
            <person name="Kremmer E."/>
            <person name="Kappler R."/>
            <person name="Langst G."/>
        </authorList>
    </citation>
    <scope>FUNCTION</scope>
    <scope>CATALYTIC ACTIVITY</scope>
    <scope>INTERACTION WITH DNMT1 AND UHRF1</scope>
    <scope>MUTAGENESIS OF CYS-223</scope>
    <scope>ACTIVE SITE</scope>
</reference>
<reference key="28">
    <citation type="journal article" date="2011" name="Sci. Signal.">
        <title>System-wide temporal characterization of the proteome and phosphoproteome of human embryonic stem cell differentiation.</title>
        <authorList>
            <person name="Rigbolt K.T."/>
            <person name="Prokhorova T.A."/>
            <person name="Akimov V."/>
            <person name="Henningsen J."/>
            <person name="Johansen P.T."/>
            <person name="Kratchmarova I."/>
            <person name="Kassem M."/>
            <person name="Mann M."/>
            <person name="Olsen J.V."/>
            <person name="Blagoev B."/>
        </authorList>
    </citation>
    <scope>PHOSPHORYLATION [LARGE SCALE ANALYSIS] AT SER-18</scope>
    <scope>IDENTIFICATION BY MASS SPECTROMETRY [LARGE SCALE ANALYSIS]</scope>
</reference>
<reference key="29">
    <citation type="journal article" date="2012" name="J. Virol.">
        <title>Proteomic profiling of the human cytomegalovirus UL35 gene products reveals a role for UL35 in the DNA repair response.</title>
        <authorList>
            <person name="Salsman J."/>
            <person name="Jagannathan M."/>
            <person name="Paladino P."/>
            <person name="Chan P.K."/>
            <person name="Dellaire G."/>
            <person name="Raught B."/>
            <person name="Frappier L."/>
        </authorList>
    </citation>
    <scope>INTERACTION WITH HUMAN CYTOMEGALOVIRUS PROTEINS UL35 AND UL35A (MICROBIAL INFECTION)</scope>
</reference>
<reference key="30">
    <citation type="journal article" date="2012" name="Proc. Natl. Acad. Sci. U.S.A.">
        <title>M phase phosphorylation of the epigenetic regulator UHRF1 regulates its physical association with the deubiquitylase USP7 and stability.</title>
        <authorList>
            <person name="Ma H."/>
            <person name="Chen H."/>
            <person name="Guo X."/>
            <person name="Wang Z."/>
            <person name="Sowa M.E."/>
            <person name="Zheng L."/>
            <person name="Hu S."/>
            <person name="Zeng P."/>
            <person name="Guo R."/>
            <person name="Diao J."/>
            <person name="Lan F."/>
            <person name="Harper J.W."/>
            <person name="Shi Y.G."/>
            <person name="Xu Y."/>
            <person name="Shi Y."/>
        </authorList>
    </citation>
    <scope>FUNCTION</scope>
    <scope>CATALYTIC ACTIVITY</scope>
    <scope>INTERACTION WITH UHRF1</scope>
    <scope>MUTAGENESIS OF CYS-223</scope>
    <scope>ACTIVE SITE</scope>
</reference>
<reference key="31">
    <citation type="journal article" date="2012" name="ChemBioChem">
        <title>Profiling ubiquitin linkage specificities of deubiquitinating enzymes with branched ubiquitin isopeptide probes.</title>
        <authorList>
            <person name="Iphofer A."/>
            <person name="Kummer A."/>
            <person name="Nimtz M."/>
            <person name="Ritter A."/>
            <person name="Arnold T."/>
            <person name="Frank R."/>
            <person name="van den Heuvel J."/>
            <person name="Kessler B.M."/>
            <person name="Jansch L."/>
            <person name="Franke R."/>
        </authorList>
    </citation>
    <scope>FUNCTION</scope>
    <scope>LINKAGE SPECIFICITY</scope>
</reference>
<reference key="32">
    <citation type="journal article" date="2012" name="EMBO J.">
        <title>The RNA-binding E3 ubiquitin ligase MEX-3C links ubiquitination with MHC-I mRNA degradation.</title>
        <authorList>
            <person name="Cano F."/>
            <person name="Bye H."/>
            <person name="Duncan L.M."/>
            <person name="Buchet-Poyau K."/>
            <person name="Billaud M."/>
            <person name="Wills M.R."/>
            <person name="Lehner P.J."/>
        </authorList>
    </citation>
    <scope>INTERACTION WITH MEX3C</scope>
</reference>
<reference key="33">
    <citation type="journal article" date="2012" name="Nat. Genet.">
        <title>UV-sensitive syndrome protein UVSSA recruits USP7 to regulate transcription-coupled repair.</title>
        <authorList>
            <person name="Schwertman P."/>
            <person name="Lagarou A."/>
            <person name="Dekkers D.H."/>
            <person name="Raams A."/>
            <person name="van der Hoek A.C."/>
            <person name="Laffeber C."/>
            <person name="Hoeijmakers J.H."/>
            <person name="Demmers J.A."/>
            <person name="Fousteri M."/>
            <person name="Vermeulen W."/>
            <person name="Marteijn J.A."/>
        </authorList>
    </citation>
    <scope>FUNCTION</scope>
    <scope>INTERACTION WITH UVSSA</scope>
</reference>
<reference key="34">
    <citation type="journal article" date="2012" name="Nat. Genet.">
        <title>Mutations in UVSSA cause UV-sensitive syndrome and destabilize ERCC6 in transcription-coupled DNA repair.</title>
        <authorList>
            <person name="Zhang X."/>
            <person name="Horibata K."/>
            <person name="Saijo M."/>
            <person name="Ishigami C."/>
            <person name="Ukai A."/>
            <person name="Kanno S.I."/>
            <person name="Tahara H."/>
            <person name="Neilan E.G."/>
            <person name="Honma M."/>
            <person name="Nohmi T."/>
            <person name="Yasui A."/>
            <person name="Tanaka K."/>
        </authorList>
    </citation>
    <scope>FUNCTION</scope>
    <scope>INTERACTION WITH UVSSA</scope>
</reference>
<reference key="35">
    <citation type="journal article" date="2013" name="Immunity">
        <title>Stabilization of the transcription factor Foxp3 by the deubiquitinase USP7 increases Treg-cell-suppressive capacity.</title>
        <authorList>
            <person name="van Loosdregt J."/>
            <person name="Fleskens V."/>
            <person name="Fu J."/>
            <person name="Brenkman A.B."/>
            <person name="Bekker C.P."/>
            <person name="Pals C.E."/>
            <person name="Meerding J."/>
            <person name="Berkers C.R."/>
            <person name="Barbi J."/>
            <person name="Grone A."/>
            <person name="Sijts A.J."/>
            <person name="Maurice M.M."/>
            <person name="Kalkhoven E."/>
            <person name="Prakken B.J."/>
            <person name="Ovaa H."/>
            <person name="Pan F."/>
            <person name="Zaiss D.M."/>
            <person name="Coffer P.J."/>
        </authorList>
    </citation>
    <scope>IDENTIFICATION BY MASS SPECTROMETRY</scope>
    <scope>FUNCTION</scope>
    <scope>SUBCELLULAR LOCATION</scope>
    <scope>INTERACTION WITH FOXP3</scope>
    <scope>INDUCTION</scope>
</reference>
<reference key="36">
    <citation type="journal article" date="2013" name="J. Proteome Res.">
        <title>Toward a comprehensive characterization of a human cancer cell phosphoproteome.</title>
        <authorList>
            <person name="Zhou H."/>
            <person name="Di Palma S."/>
            <person name="Preisinger C."/>
            <person name="Peng M."/>
            <person name="Polat A.N."/>
            <person name="Heck A.J."/>
            <person name="Mohammed S."/>
        </authorList>
    </citation>
    <scope>PHOSPHORYLATION [LARGE SCALE ANALYSIS] AT SER-18</scope>
    <scope>IDENTIFICATION BY MASS SPECTROMETRY [LARGE SCALE ANALYSIS]</scope>
    <source>
        <tissue>Cervix carcinoma</tissue>
        <tissue>Erythroleukemia</tissue>
    </source>
</reference>
<reference key="37">
    <citation type="journal article" date="2014" name="J. Proteomics">
        <title>An enzyme assisted RP-RPLC approach for in-depth analysis of human liver phosphoproteome.</title>
        <authorList>
            <person name="Bian Y."/>
            <person name="Song C."/>
            <person name="Cheng K."/>
            <person name="Dong M."/>
            <person name="Wang F."/>
            <person name="Huang J."/>
            <person name="Sun D."/>
            <person name="Wang L."/>
            <person name="Ye M."/>
            <person name="Zou H."/>
        </authorList>
    </citation>
    <scope>PHOSPHORYLATION [LARGE SCALE ANALYSIS] AT SER-18</scope>
    <scope>IDENTIFICATION BY MASS SPECTROMETRY [LARGE SCALE ANALYSIS]</scope>
    <source>
        <tissue>Liver</tissue>
    </source>
</reference>
<reference key="38">
    <citation type="journal article" date="2014" name="Mol. Cell. Biol.">
        <title>Identification of a novel protein interaction motif in the regulatory subunit of casein kinase 2.</title>
        <authorList>
            <person name="Cao J.Y."/>
            <person name="Shire K."/>
            <person name="Landry C."/>
            <person name="Gish G.D."/>
            <person name="Pawson T."/>
            <person name="Frappier L."/>
        </authorList>
    </citation>
    <scope>INTERACTION WITH EPSTEIN-BARR VIRUS EBNA1 (MICROBIAL INFECTION)</scope>
</reference>
<reference key="39">
    <citation type="journal article" date="2014" name="Mol. Cell. Biol.">
        <title>The ubiquitin ligase RNF220 enhances canonical Wnt signaling through USP7-mediated deubiquitination of beta-catenin.</title>
        <authorList>
            <person name="Ma P."/>
            <person name="Yang X."/>
            <person name="Kong Q."/>
            <person name="Li C."/>
            <person name="Yang S."/>
            <person name="Li Y."/>
            <person name="Mao B."/>
        </authorList>
    </citation>
    <scope>INTERACTION WITH RNF220</scope>
</reference>
<reference key="40">
    <citation type="journal article" date="2014" name="Nat. Commun.">
        <title>ABRO1 suppresses tumourigenesis and regulates the DNA damage response by stabilizing p53.</title>
        <authorList>
            <person name="Zhang J."/>
            <person name="Cao M."/>
            <person name="Dong J."/>
            <person name="Li C."/>
            <person name="Xu W."/>
            <person name="Zhan Y."/>
            <person name="Wang X."/>
            <person name="Yu M."/>
            <person name="Ge C."/>
            <person name="Ge Z."/>
            <person name="Yang X."/>
        </authorList>
    </citation>
    <scope>FUNCTION</scope>
    <scope>CATALYTIC ACTIVITY</scope>
    <scope>INTERACTION WITH ABRAXAS2 AND TP53</scope>
    <scope>SUBCELLULAR LOCATION</scope>
</reference>
<reference key="41">
    <citation type="journal article" date="2014" name="Proc. Natl. Acad. Sci. U.S.A.">
        <title>Mapping of SUMO sites and analysis of SUMOylation changes induced by external stimuli.</title>
        <authorList>
            <person name="Impens F."/>
            <person name="Radoshevich L."/>
            <person name="Cossart P."/>
            <person name="Ribet D."/>
        </authorList>
    </citation>
    <scope>SUMOYLATION [LARGE SCALE ANALYSIS] AT LYS-869</scope>
    <scope>IDENTIFICATION BY MASS SPECTROMETRY [LARGE SCALE ANALYSIS]</scope>
</reference>
<reference key="42">
    <citation type="journal article" date="2015" name="Nat. Commun.">
        <title>The stress-responsive gene ATF3 regulates the histone acetyltransferase Tip60.</title>
        <authorList>
            <person name="Cui H."/>
            <person name="Guo M."/>
            <person name="Xu D."/>
            <person name="Ding Z.C."/>
            <person name="Zhou G."/>
            <person name="Ding H.F."/>
            <person name="Zhang J."/>
            <person name="Tang Y."/>
            <person name="Yan C."/>
        </authorList>
    </citation>
    <scope>FUNCTION</scope>
    <scope>CATALYTIC ACTIVITY</scope>
</reference>
<reference key="43">
    <citation type="journal article" date="2015" name="PLoS ONE">
        <title>Identification of Novel Proteins Co-Purifying with Cockayne Syndrome Group B (CSB) Reveals Potential Roles for CSB in RNA Metabolism and Chromatin Dynamics.</title>
        <authorList>
            <person name="Nicolai S."/>
            <person name="Filippi S."/>
            <person name="Caputo M."/>
            <person name="Cipak L."/>
            <person name="Gregan J."/>
            <person name="Ammerer G."/>
            <person name="Frontini M."/>
            <person name="Willems D."/>
            <person name="Prantera G."/>
            <person name="Balajee A.S."/>
            <person name="Proietti-De-Santis L."/>
        </authorList>
    </citation>
    <scope>INTERACTION WITH ERCC6</scope>
</reference>
<reference key="44">
    <citation type="journal article" date="2015" name="PLoS ONE">
        <title>Mixed lineage leukemia 5 (MLL5) protein stability is cooperatively regulated by O-GlcNac transferase (OGT) and ubiquitin specific protease 7 (USP7).</title>
        <authorList>
            <person name="Ding X."/>
            <person name="Jiang W."/>
            <person name="Zhou P."/>
            <person name="Liu L."/>
            <person name="Wan X."/>
            <person name="Yuan X."/>
            <person name="Wang X."/>
            <person name="Chen M."/>
            <person name="Chen J."/>
            <person name="Yang J."/>
            <person name="Kong C."/>
            <person name="Li B."/>
            <person name="Peng C."/>
            <person name="Wong C.C."/>
            <person name="Hou F."/>
            <person name="Zhang Y."/>
        </authorList>
    </citation>
    <scope>FUNCTION</scope>
    <scope>CATALYTIC ACTIVITY</scope>
    <scope>IDENTIFICATION IN A COMPLEX WITH OGT AND KMT2E</scope>
    <scope>INTERACTION WITH OGT AND KMT2E</scope>
    <scope>SUBCELLULAR LOCATION</scope>
    <scope>MUTAGENESIS OF CYS-223</scope>
</reference>
<reference key="45">
    <citation type="journal article" date="2016" name="PLoS ONE">
        <title>USP7 and TDP-43: pleiotropic regulation of cryptochrome protein stability paces the oscillation of the mammalian circadian clock.</title>
        <authorList>
            <person name="Hirano A."/>
            <person name="Nakagawa T."/>
            <person name="Yoshitane H."/>
            <person name="Oyama M."/>
            <person name="Kozuka-Hata H."/>
            <person name="Lanjakornsiripan D."/>
            <person name="Fukada Y."/>
        </authorList>
    </citation>
    <scope>FUNCTION</scope>
    <scope>INTERACTION WITH CRY2</scope>
    <scope>MUTAGENESIS OF CYS-223</scope>
</reference>
<reference key="46">
    <citation type="journal article" date="2016" name="J. Biol. Chem.">
        <title>Identification of Kaposi Sarcoma Herpesvirus (KSHV) vIRF1 Protein as a Novel Interaction Partner of Human Deubiquitinase USP7.</title>
        <authorList>
            <person name="Chavoshi S."/>
            <person name="Egorova O."/>
            <person name="Lacdao I.K."/>
            <person name="Farhadi S."/>
            <person name="Sheng Y."/>
            <person name="Saridakis V."/>
        </authorList>
    </citation>
    <scope>FUNCTION</scope>
    <scope>INTERACTION WITH HERPES VIRUS 8/HHV-8 PROTEIN VIRF-1 (MICROBIAL INFECTION)</scope>
</reference>
<reference key="47">
    <citation type="journal article" date="2017" name="J. Biol. Chem.">
        <title>Ubiquitin-specific peptidase 7 (USP7)-mediated deubiquitination of the histone deacetylase SIRT7 regulates gluconeogenesis.</title>
        <authorList>
            <person name="Jiang L."/>
            <person name="Xiong J."/>
            <person name="Zhan J."/>
            <person name="Yuan F."/>
            <person name="Tang M."/>
            <person name="Zhang C."/>
            <person name="Cao Z."/>
            <person name="Chen Y."/>
            <person name="Lu X."/>
            <person name="Li Y."/>
            <person name="Wang H."/>
            <person name="Wang L."/>
            <person name="Wang J."/>
            <person name="Zhu W.G."/>
            <person name="Wang H."/>
        </authorList>
    </citation>
    <scope>FUNCTION</scope>
    <scope>CATALYTIC ACTIVITY</scope>
    <scope>MUTAGENESIS OF CYS-223</scope>
</reference>
<reference key="48">
    <citation type="journal article" date="2017" name="Nat. Struct. Mol. Biol.">
        <title>Site-specific mapping of the human SUMO proteome reveals co-modification with phosphorylation.</title>
        <authorList>
            <person name="Hendriks I.A."/>
            <person name="Lyon D."/>
            <person name="Young C."/>
            <person name="Jensen L.J."/>
            <person name="Vertegaal A.C."/>
            <person name="Nielsen M.L."/>
        </authorList>
    </citation>
    <scope>SUMOYLATION [LARGE SCALE ANALYSIS] AT LYS-869 AND LYS-882</scope>
    <scope>IDENTIFICATION BY MASS SPECTROMETRY [LARGE SCALE ANALYSIS]</scope>
</reference>
<reference key="49">
    <citation type="journal article" date="2018" name="J. Virol.">
        <title>Human Herpesvirus 8 Interferon Regulatory Factors 1 and 3 Mediate Replication and Latency Activities via Interactions with USP7 Deubiquitinase.</title>
        <authorList>
            <person name="Xiang Q."/>
            <person name="Ju H."/>
            <person name="Li Q."/>
            <person name="Mei S.C."/>
            <person name="Chen D."/>
            <person name="Choi Y.B."/>
            <person name="Nicholas J."/>
        </authorList>
    </citation>
    <scope>INTERACTION WITH HERPES VIRUS 8/HHV-8 PROTEIN VIRF-1 AND VIRF-3 (MICROBIAL INFECTION)</scope>
</reference>
<reference key="50">
    <citation type="journal article" date="2020" name="J. Virol.">
        <title>USP7-Dependent Regulation of TRAF Activation and Signaling by a Viral Interferon Regulatory Factor Homologue.</title>
        <authorList>
            <person name="Xiang Q."/>
            <person name="Ju H."/>
            <person name="Nicholas J."/>
        </authorList>
    </citation>
    <scope>INTERACTION WITH HERPES VIRUS 8/HHV-8 PROTEIN VIRF-2 (MICROBIAL INFECTION)</scope>
</reference>
<reference key="51">
    <citation type="journal article" date="2021" name="J. Cell. Mol. Med.">
        <title>Deubiquitylation and stabilization of ARMC5 by ubiquitin-specific processing protease 7 (USP7) are critical for RCC proliferation.</title>
        <authorList>
            <person name="Yan G."/>
            <person name="Liu N."/>
            <person name="Tian J."/>
            <person name="Fu Y."/>
            <person name="Wei W."/>
            <person name="Zou J."/>
            <person name="Li S."/>
            <person name="Wang Q."/>
            <person name="Li K."/>
            <person name="Wang J."/>
        </authorList>
    </citation>
    <scope>FUNCTION</scope>
    <scope>CATALYTIC ACTIVITY</scope>
</reference>
<reference key="52">
    <citation type="journal article" date="2022" name="J. Biol. Chem.">
        <title>Turnover of the mTOR inhibitor, DEPTOR, and downstream AKT phosphorylation in multiple myeloma cells, is dependent on ERK1-mediated phosphorylation.</title>
        <authorList>
            <person name="Vega M."/>
            <person name="Chen Y."/>
            <person name="Shi Y."/>
            <person name="Gera J."/>
            <person name="Lichtenstein A."/>
        </authorList>
    </citation>
    <scope>FUNCTION</scope>
    <scope>CATALYTIC ACTIVITY</scope>
</reference>
<reference key="53">
    <citation type="journal article" date="2002" name="Cell">
        <title>Crystal structure of a UBP-family deubiquitinating enzyme in isolation and in complex with ubiquitin aldehyde.</title>
        <authorList>
            <person name="Hu M."/>
            <person name="Li P."/>
            <person name="Li M."/>
            <person name="Li W."/>
            <person name="Yao T."/>
            <person name="Wu J.-W."/>
            <person name="Gu W."/>
            <person name="Cohen R.E."/>
            <person name="Shi Y."/>
        </authorList>
    </citation>
    <scope>X-RAY CRYSTALLOGRAPHY (2.3 ANGSTROMS) OF 208-560 IN COMPLEX WITH UBIQUITIN</scope>
    <scope>CATALYTIC ACTIVITY</scope>
    <scope>ACTIVE SITE</scope>
    <scope>MUTAGENESIS OF CYS-223; HIS-456 AND HIS-464</scope>
    <scope>INTERACTION WITH TP53</scope>
</reference>
<reference key="54">
    <citation type="journal article" date="2005" name="Mol. Cell">
        <title>Structure of the p53 binding domain of HAUSP/USP7 bound to Epstein-Barr nuclear antigen 1 implications for EBV-mediated immortalization.</title>
        <authorList>
            <person name="Saridakis V."/>
            <person name="Sheng Y."/>
            <person name="Sarkari F."/>
            <person name="Holowaty M.N."/>
            <person name="Shire K."/>
            <person name="Nguyen T."/>
            <person name="Zhang R.G."/>
            <person name="Liao J."/>
            <person name="Lee W."/>
            <person name="Edwards A.M."/>
            <person name="Arrowsmith C.H."/>
            <person name="Frappier L."/>
        </authorList>
    </citation>
    <scope>X-RAY CRYSTALLOGRAPHY (1.7 ANGSTROMS) OF 54-205 IN COMPLEX WITH EBNA1</scope>
    <scope>INTERACTION WITH EBV EBNA1</scope>
</reference>
<reference key="55">
    <citation type="journal article" date="2006" name="PLoS Biol.">
        <title>Structural basis of competitive recognition of p53 and MDM2 by HAUSP/USP7: implications for the regulation of the p53-MDM2 pathway.</title>
        <authorList>
            <person name="Hu M."/>
            <person name="Gu L."/>
            <person name="Li M."/>
            <person name="Jeffrey P.D."/>
            <person name="Gu W."/>
            <person name="Shi Y."/>
        </authorList>
    </citation>
    <scope>X-RAY CRYSTALLOGRAPHY (1.65 ANGSTROMS) OF 43-560 IN COMPLEX WITH TP53 AND MDM2</scope>
    <scope>INTERACTION WITH TP53 AND MDM2</scope>
</reference>
<reference key="56">
    <citation type="journal article" date="2006" name="Nat. Struct. Mol. Biol.">
        <title>Molecular recognition of p53 and MDM2 by USP7/HAUSP.</title>
        <authorList>
            <person name="Sheng Y."/>
            <person name="Saridakis V."/>
            <person name="Sarkari F."/>
            <person name="Duan S."/>
            <person name="Wu T."/>
            <person name="Arrowsmith C.H."/>
            <person name="Frappier L."/>
        </authorList>
    </citation>
    <scope>X-RAY CRYSTALLOGRAPHY (1.6 ANGSTROMS) OF 54-205 IN COMPLEX WITH TP53 AND MDM2</scope>
    <scope>INTERACTION WITH TP53 AND MDM2</scope>
    <scope>MUTAGENESIS OF ASP-164 AND TRP-165</scope>
</reference>
<reference key="57">
    <citation type="journal article" date="2015" name="EMBO J.">
        <title>Noncanonical regulation of alkylation damage resistance by the OTUD4 deubiquitinase.</title>
        <authorList>
            <person name="Zhao Y."/>
            <person name="Majid M.C."/>
            <person name="Soll J.M."/>
            <person name="Brickner J.R."/>
            <person name="Dango S."/>
            <person name="Mosammaparast N."/>
        </authorList>
    </citation>
    <scope>FUNCTION</scope>
    <scope>INTERACTION WITH OTUD4; ALKBH3 AND USP9X</scope>
    <scope>MUTAGENESIS OF CYS-223</scope>
    <scope>ACTIVE SITE</scope>
</reference>
<reference key="58">
    <citation type="journal article" date="2015" name="Mol. Cell">
        <title>USP7 Acts as a Molecular Rheostat to Promote WASH-Dependent Endosomal Protein Recycling and Is Mutated in a Human Neurodevelopmental Disorder.</title>
        <authorList>
            <person name="Hao Y.H."/>
            <person name="Fountain M.D. Jr."/>
            <person name="Fon Tacer K."/>
            <person name="Xia F."/>
            <person name="Bi W."/>
            <person name="Kang S.H."/>
            <person name="Patel A."/>
            <person name="Rosenfeld J.A."/>
            <person name="Le Caignec C."/>
            <person name="Isidor B."/>
            <person name="Krantz I.D."/>
            <person name="Noon S.E."/>
            <person name="Pfotenhauer J.P."/>
            <person name="Morgan T.M."/>
            <person name="Moran R."/>
            <person name="Pedersen R.C."/>
            <person name="Saenz M.S."/>
            <person name="Schaaf C.P."/>
            <person name="Potts P.R."/>
        </authorList>
    </citation>
    <scope>VARIANT HAFOUS 143-TYR--ASN-1102 DEL</scope>
    <scope>INVOLVEMENT IN HAFOUS</scope>
    <scope>CHARACTERIZATION OF VARIANT HAFOUS 143-TYR--ASN-1102 DEL</scope>
    <scope>INTERACTION WITH MAGEL2 AND TRIM27</scope>
    <scope>MUTAGENESIS OF CYS-223</scope>
    <scope>FUNCTION</scope>
</reference>
<reference key="59">
    <citation type="journal article" date="2019" name="Genet. Med.">
        <title>Pathogenic variants in USP7 cause a neurodevelopmental disorder with speech delays, altered behavior, and neurologic anomalies.</title>
        <authorList>
            <person name="Fountain M.D."/>
            <person name="Oleson D.S."/>
            <person name="Rech M.E."/>
            <person name="Segebrecht L."/>
            <person name="Hunter J.V."/>
            <person name="McCarthy J.M."/>
            <person name="Lupo P.J."/>
            <person name="Holtgrewe M."/>
            <person name="Moran R."/>
            <person name="Rosenfeld J.A."/>
            <person name="Isidor B."/>
            <person name="Le Caignec C."/>
            <person name="Saenz M.S."/>
            <person name="Pedersen R.C."/>
            <person name="Morgan T.M."/>
            <person name="Pfotenhauer J.P."/>
            <person name="Xia F."/>
            <person name="Bi W."/>
            <person name="Kang S.L."/>
            <person name="Patel A."/>
            <person name="Krantz I.D."/>
            <person name="Raible S.E."/>
            <person name="Smith W."/>
            <person name="Cristian I."/>
            <person name="Torti E."/>
            <person name="Juusola J."/>
            <person name="Millan F."/>
            <person name="Wentzensen I.M."/>
            <person name="Person R.E."/>
            <person name="Kuery S."/>
            <person name="Bezieau S."/>
            <person name="Uguen K."/>
            <person name="Ferec C."/>
            <person name="Munnich A."/>
            <person name="van Haelst M."/>
            <person name="Lichtenbelt K.D."/>
            <person name="van Gassen K."/>
            <person name="Hagelstrom T."/>
            <person name="Chawla A."/>
            <person name="Perry D.L."/>
            <person name="Taft R.J."/>
            <person name="Jones M."/>
            <person name="Masser-Frye D."/>
            <person name="Dyment D."/>
            <person name="Venkateswaran S."/>
            <person name="Li C."/>
            <person name="Escobar L.F."/>
            <person name="Horn D."/>
            <person name="Spillmann R.C."/>
            <person name="Pena L."/>
            <person name="Wierzba J."/>
            <person name="Strom T.M."/>
            <person name="Parenti I."/>
            <person name="Kaiser F.J."/>
            <person name="Ehmke N."/>
            <person name="Schaaf C.P."/>
        </authorList>
    </citation>
    <scope>VARIANTS HAFOUS ILE-225; LYS-345; PHE-373; ASP-392; GLY-485; 576-CYS--ASN-1102 DEL; PRO-757; THR-766 AND ASN-1080</scope>
    <scope>INVOLVEMENT IN HAFOUS</scope>
</reference>
<accession>Q93009</accession>
<accession>A6NMY8</accession>
<accession>B7Z815</accession>
<accession>H0Y3G8</accession>
<evidence type="ECO:0000250" key="1"/>
<evidence type="ECO:0000250" key="2">
    <source>
        <dbReference type="UniProtKB" id="Q6A4J8"/>
    </source>
</evidence>
<evidence type="ECO:0000255" key="3">
    <source>
        <dbReference type="PROSITE-ProRule" id="PRU00129"/>
    </source>
</evidence>
<evidence type="ECO:0000256" key="4">
    <source>
        <dbReference type="SAM" id="MobiDB-lite"/>
    </source>
</evidence>
<evidence type="ECO:0000269" key="5">
    <source>
    </source>
</evidence>
<evidence type="ECO:0000269" key="6">
    <source>
    </source>
</evidence>
<evidence type="ECO:0000269" key="7">
    <source>
    </source>
</evidence>
<evidence type="ECO:0000269" key="8">
    <source>
    </source>
</evidence>
<evidence type="ECO:0000269" key="9">
    <source>
    </source>
</evidence>
<evidence type="ECO:0000269" key="10">
    <source>
    </source>
</evidence>
<evidence type="ECO:0000269" key="11">
    <source>
    </source>
</evidence>
<evidence type="ECO:0000269" key="12">
    <source>
    </source>
</evidence>
<evidence type="ECO:0000269" key="13">
    <source>
    </source>
</evidence>
<evidence type="ECO:0000269" key="14">
    <source>
    </source>
</evidence>
<evidence type="ECO:0000269" key="15">
    <source>
    </source>
</evidence>
<evidence type="ECO:0000269" key="16">
    <source>
    </source>
</evidence>
<evidence type="ECO:0000269" key="17">
    <source>
    </source>
</evidence>
<evidence type="ECO:0000269" key="18">
    <source>
    </source>
</evidence>
<evidence type="ECO:0000269" key="19">
    <source>
    </source>
</evidence>
<evidence type="ECO:0000269" key="20">
    <source>
    </source>
</evidence>
<evidence type="ECO:0000269" key="21">
    <source>
    </source>
</evidence>
<evidence type="ECO:0000269" key="22">
    <source>
    </source>
</evidence>
<evidence type="ECO:0000269" key="23">
    <source>
    </source>
</evidence>
<evidence type="ECO:0000269" key="24">
    <source>
    </source>
</evidence>
<evidence type="ECO:0000269" key="25">
    <source>
    </source>
</evidence>
<evidence type="ECO:0000269" key="26">
    <source>
    </source>
</evidence>
<evidence type="ECO:0000269" key="27">
    <source>
    </source>
</evidence>
<evidence type="ECO:0000269" key="28">
    <source>
    </source>
</evidence>
<evidence type="ECO:0000269" key="29">
    <source>
    </source>
</evidence>
<evidence type="ECO:0000269" key="30">
    <source>
    </source>
</evidence>
<evidence type="ECO:0000269" key="31">
    <source>
    </source>
</evidence>
<evidence type="ECO:0000269" key="32">
    <source>
    </source>
</evidence>
<evidence type="ECO:0000269" key="33">
    <source>
    </source>
</evidence>
<evidence type="ECO:0000269" key="34">
    <source>
    </source>
</evidence>
<evidence type="ECO:0000269" key="35">
    <source>
    </source>
</evidence>
<evidence type="ECO:0000269" key="36">
    <source>
    </source>
</evidence>
<evidence type="ECO:0000269" key="37">
    <source>
    </source>
</evidence>
<evidence type="ECO:0000269" key="38">
    <source>
    </source>
</evidence>
<evidence type="ECO:0000269" key="39">
    <source>
    </source>
</evidence>
<evidence type="ECO:0000269" key="40">
    <source>
    </source>
</evidence>
<evidence type="ECO:0000269" key="41">
    <source>
    </source>
</evidence>
<evidence type="ECO:0000269" key="42">
    <source>
    </source>
</evidence>
<evidence type="ECO:0000269" key="43">
    <source>
    </source>
</evidence>
<evidence type="ECO:0000269" key="44">
    <source>
    </source>
</evidence>
<evidence type="ECO:0000269" key="45">
    <source>
    </source>
</evidence>
<evidence type="ECO:0000269" key="46">
    <source>
    </source>
</evidence>
<evidence type="ECO:0000269" key="47">
    <source>
    </source>
</evidence>
<evidence type="ECO:0000303" key="48">
    <source>
    </source>
</evidence>
<evidence type="ECO:0000303" key="49">
    <source>
    </source>
</evidence>
<evidence type="ECO:0000303" key="50">
    <source>
    </source>
</evidence>
<evidence type="ECO:0000305" key="51"/>
<evidence type="ECO:0000305" key="52">
    <source>
    </source>
</evidence>
<evidence type="ECO:0000305" key="53">
    <source>
    </source>
</evidence>
<evidence type="ECO:0000305" key="54">
    <source>
    </source>
</evidence>
<evidence type="ECO:0000305" key="55">
    <source>
    </source>
</evidence>
<evidence type="ECO:0000305" key="56">
    <source>
    </source>
</evidence>
<evidence type="ECO:0000305" key="57">
    <source>
    </source>
</evidence>
<evidence type="ECO:0000305" key="58">
    <source>
    </source>
</evidence>
<evidence type="ECO:0000312" key="59">
    <source>
        <dbReference type="HGNC" id="HGNC:12630"/>
    </source>
</evidence>
<evidence type="ECO:0007744" key="60">
    <source>
    </source>
</evidence>
<evidence type="ECO:0007744" key="61">
    <source>
    </source>
</evidence>
<evidence type="ECO:0007744" key="62">
    <source>
    </source>
</evidence>
<evidence type="ECO:0007744" key="63">
    <source>
    </source>
</evidence>
<evidence type="ECO:0007744" key="64">
    <source>
    </source>
</evidence>
<evidence type="ECO:0007744" key="65">
    <source>
    </source>
</evidence>
<evidence type="ECO:0007744" key="66">
    <source>
    </source>
</evidence>
<evidence type="ECO:0007744" key="67">
    <source>
    </source>
</evidence>
<evidence type="ECO:0007829" key="68">
    <source>
        <dbReference type="PDB" id="1NB8"/>
    </source>
</evidence>
<evidence type="ECO:0007829" key="69">
    <source>
        <dbReference type="PDB" id="2F1X"/>
    </source>
</evidence>
<evidence type="ECO:0007829" key="70">
    <source>
        <dbReference type="PDB" id="2F1Z"/>
    </source>
</evidence>
<evidence type="ECO:0007829" key="71">
    <source>
        <dbReference type="PDB" id="2XXN"/>
    </source>
</evidence>
<evidence type="ECO:0007829" key="72">
    <source>
        <dbReference type="PDB" id="2YLM"/>
    </source>
</evidence>
<evidence type="ECO:0007829" key="73">
    <source>
        <dbReference type="PDB" id="4YOC"/>
    </source>
</evidence>
<evidence type="ECO:0007829" key="74">
    <source>
        <dbReference type="PDB" id="4YSI"/>
    </source>
</evidence>
<evidence type="ECO:0007829" key="75">
    <source>
        <dbReference type="PDB" id="4Z96"/>
    </source>
</evidence>
<evidence type="ECO:0007829" key="76">
    <source>
        <dbReference type="PDB" id="5C56"/>
    </source>
</evidence>
<evidence type="ECO:0007829" key="77">
    <source>
        <dbReference type="PDB" id="5C6D"/>
    </source>
</evidence>
<evidence type="ECO:0007829" key="78">
    <source>
        <dbReference type="PDB" id="5J7T"/>
    </source>
</evidence>
<evidence type="ECO:0007829" key="79">
    <source>
        <dbReference type="PDB" id="5KYC"/>
    </source>
</evidence>
<evidence type="ECO:0007829" key="80">
    <source>
        <dbReference type="PDB" id="5KYD"/>
    </source>
</evidence>
<evidence type="ECO:0007829" key="81">
    <source>
        <dbReference type="PDB" id="5N9T"/>
    </source>
</evidence>
<evidence type="ECO:0007829" key="82">
    <source>
        <dbReference type="PDB" id="6F5H"/>
    </source>
</evidence>
<evidence type="ECO:0007829" key="83">
    <source>
        <dbReference type="PDB" id="6P5L"/>
    </source>
</evidence>
<evidence type="ECO:0007829" key="84">
    <source>
        <dbReference type="PDB" id="7VIJ"/>
    </source>
</evidence>
<evidence type="ECO:0007829" key="85">
    <source>
        <dbReference type="PDB" id="7XHH"/>
    </source>
</evidence>
<evidence type="ECO:0007829" key="86">
    <source>
        <dbReference type="PDB" id="7XPY"/>
    </source>
</evidence>
<comment type="function">
    <text evidence="5 9 12 13 15 17 18 19 22 23 25 26 27 28 30 33 34 35 37 38 39 40 41 45 46">Hydrolase that deubiquitinates target proteins such as ARMC5, FOXO4, DEPTOR, KAT5, p53/TP53, MDM2, ERCC6, DNMT1, UHRF1, PTEN, KMT2E/MLL5 and DAXX (PubMed:11923872, PubMed:15053880, PubMed:16964248, PubMed:18716620, PubMed:25283148, PubMed:25865756, PubMed:26678539, PubMed:28655758, PubMed:33544460, PubMed:35216969). Together with DAXX, prevents MDM2 self-ubiquitination and enhances the E3 ligase activity of MDM2 towards p53/TP53, thereby promoting p53/TP53 ubiquitination and proteasomal degradation (PubMed:15053880, PubMed:16845383, PubMed:18566590, PubMed:20153724). Deubiquitinates p53/TP53, preventing degradation of p53/TP53, and enhances p53/TP53-dependent transcription regulation, cell growth repression and apoptosis (PubMed:25283148). Deubiquitinates p53/TP53 and MDM2 and strongly stabilizes p53/TP53 even in the presence of excess MDM2, and also induces p53/TP53-dependent cell growth repression and apoptosis (PubMed:11923872, PubMed:26786098). Deubiquitination of FOXO4 in presence of hydrogen peroxide is not dependent on p53/TP53 and inhibits FOXO4-induced transcriptional activity (PubMed:16964248). In association with DAXX, is involved in the deubiquitination and translocation of PTEN from the nucleus to the cytoplasm, both processes that are counteracted by PML (PubMed:18716620). Deubiquitinates KMT2E/MLL5 preventing KMT2E/MLL5 proteasomal-mediated degradation (PubMed:26678539). Involved in cell proliferation during early embryonic development. Involved in transcription-coupled nucleotide excision repair (TC-NER) in response to UV damage: recruited to DNA damage sites following interaction with KIAA1530/UVSSA and promotes deubiquitination of ERCC6, preventing UV-induced degradation of ERCC6 (PubMed:22466611, PubMed:22466612). Involved in maintenance of DNA methylation via its interaction with UHRF1 and DNMT1: acts by mediating deubiquitination of UHRF1 and DNMT1, preventing their degradation and promoting DNA methylation by DNMT1 (PubMed:21745816, PubMed:22411829). Deubiquitinates alkylation repair enzyme ALKBH3. OTUD4 recruits USP7 and USP9X to stabilize ALKBH3, thereby promoting the repair of alkylated DNA lesions (PubMed:25944111). Acts as a chromatin regulator via its association with the Polycomb group (PcG) multiprotein PRC1-like complex; may act by deubiquitinating components of the PRC1-like complex (PubMed:20601937). Able to mediate deubiquitination of histone H2B; it is however unsure whether this activity takes place in vivo (PubMed:20601937). Exhibits a preference towards 'Lys-48'-linked ubiquitin chains (PubMed:22689415). Increases regulatory T-cells (Treg) suppressive capacity by deubiquitinating and stabilizing the transcription factor FOXP3 which is crucial for Treg cell function (PubMed:23973222). Plays a role in the maintenance of the circadian clock periodicity via deubiquitination and stabilization of the CRY1 and CRY2 proteins (PubMed:27123980). Deubiquitinates REST, thereby stabilizing REST and promoting the maintenance of neural progenitor cells (PubMed:21258371). Deubiquitinates SIRT7, inhibiting SIRT7 histone deacetylase activity and regulating gluconeogenesis (PubMed:28655758). Involved in the regulation of WASH-dependent actin polymerization at the surface of endosomes and the regulation of endosomal protein recycling (PubMed:26365382). It maintains optimal WASH complex activity and precise F-actin levels via deubiquitination of TRIM27 and WASHC1 (PubMed:26365382). Mediates the deubiquitination of phosphorylated DEPTOR, promoting its stability and leading to decreased mTORC1 signaling (PubMed:35216969).</text>
</comment>
<comment type="function">
    <text evidence="8 10 16">(Microbial infection) Contributes to the overall stabilization and trans-activation capability of the herpesvirus 1 trans-acting transcriptional protein ICP0/VMW110 during HSV-1 infection.</text>
</comment>
<comment type="function">
    <text evidence="20 31">(Microbial infection) Upon infection with Epstein-Barr virus, the interaction with viral EBNA1 increases the association of USP7 with PML proteins, which is required for the polyubiquitylation and degradation of PML.</text>
</comment>
<comment type="catalytic activity">
    <reaction evidence="5 7 8 9 13 17 23 34 38 41 45 46">
        <text>Thiol-dependent hydrolysis of ester, thioester, amide, peptide and isopeptide bonds formed by the C-terminal Gly of ubiquitin (a 76-residue protein attached to proteins as an intracellular targeting signal).</text>
        <dbReference type="EC" id="3.4.19.12"/>
    </reaction>
</comment>
<comment type="activity regulation">
    <text evidence="8">Inhibited by N-ethyl-maleimide (NEM) and divalent cations. Tolerates high concentrations of NaCl but is inhibited at concentrations of 195 mM and higher.</text>
</comment>
<comment type="biophysicochemical properties">
    <phDependence>
        <text evidence="8">Active from pH 7.0 to 9.5.</text>
    </phDependence>
</comment>
<comment type="subunit">
    <text evidence="2 6 12 13 15 17 19 21 22 23 25 26 27 29 32 33 35 36 37 38 40">Monomer. Homodimer. Part of a complex with DAXX, MDM2, RASSF1 and USP7 (PubMed:18566590). Part of a complex with DAXX, MDM2 and USP7 (PubMed:16845383). Interacts with MDM2; the interaction is independent of p53/TP53. Interacts with DAXX; the interaction is direct and independent of MDM2 and p53/TP53 (PubMed:16845383). Component of a complex composed of KMT2E/MLL5 (isoform 3), OGT (isoform 1) and USP7; the complex stabilizes KMT2E/MLL5, preventing KMT2E/MLL5 ubiquitination and proteasomal-mediated degradation (PubMed:26678539). Interacts (via MATH domain) with KMT2E/MLL5 isoform 3 (PubMed:26678539). Interacts with OGT isoform 1 (PubMed:26678539). Interacts with FOXO4; the interaction is enhanced in presence of hydrogen peroxide and occurs independently of p53/TP53 (PubMed:16964248). Interacts with p53/TP53; the interaction is enhanced in response to DNA damage (PubMed:25283148). Interacts with TSPYL5; this impairs interaction with p53/TP53 (PubMed:21170034). Interacts with PTEN; the interaction is direct (PubMed:18716620). Interacts with ATXN1 and the strength of interaction is influenced by the length of the poly-Gln region in ATXN1 (PubMed:12093161). A weaker interaction seen with mutants having longer poly-Gln regions (PubMed:12093161). Interacts with KIAA1530/UVSSA (PubMed:22466611, PubMed:22466612). Interacts with ABRAXAS2; the interaction is direct (PubMed:25283148). Identified in a complex with TP53/p53 and ABRAXAS2 (PubMed:25283148). Interacts with MEX3C and antagonizes its ability to degrade mRNA (PubMed:22863774). Interacts with DNMT1 and UHRF1 (PubMed:21745816, PubMed:22411829). Interacts with FOXP3 (PubMed:23973222). Interacts (via MATH domain) with RNF220. Associated component of the Polycomb group (PcG) multiprotein PRC1-like complex (PubMed:20601937). Interacts with EPOP (By similarity). Interacts with OTUD4 and USP9X; the interaction is direct (PubMed:25944111). Interacts with CRY2 (PubMed:27123980). Interacts with REST (PubMed:21258371). Interacts with ERCC6 (PubMed:26030138). Part of a complex consisting of USP7, MAGEL2 and TRIM27; directly interacts with MAGEL2; directly interacts with TRIM27 (PubMed:26365382).</text>
</comment>
<comment type="subunit">
    <text evidence="8 10 16 47">(Microbial infection) Isoform 1 and isoform 2 interact with herpesvirus 1 trans-acting transcriptional protein ICP0/VMW110 (PubMed:14506283, PubMed:16160161, PubMed:18590780, PubMed:9034339). Binding to ICP0/VMW110 may modulate the substrate specificity or activity of USP7 to stabilize viral proteins.</text>
</comment>
<comment type="subunit">
    <text evidence="8 31">(Microbial infection) Interacts with Epstein-Barr virus EBNA1; the interaction is independent and simultaneous to EBNA1 interaction with USP7 as well as necessary for PML nuclear bodies disruption by EBNA1 (PubMed:14506283, PubMed:24216761). EBNA1, USP7 and CSNK2B form a ternary complex. EBNA1 shows a 10-fold higher affinity than p53/TP53 and can compete with it for USP7 binding (PubMed:14506283).</text>
</comment>
<comment type="subunit">
    <text evidence="24">(Microbial infection) Interacts with human cytomegalovirus proteins UL35 and UL35A; these interactions inhibit the ability of USP7 to form nuclear bodies.</text>
</comment>
<comment type="subunit">
    <text evidence="42 44">(Microbial infection) Interacts with herpes virus 8/HHV-8 proteins vIRF-1 and vIRF-3; these interactions may disrupt TP53 signaling pathway during viral infection by decreasing the availability of USP7 for deubiquitinating and stabilizing TP53.</text>
</comment>
<comment type="subunit">
    <text evidence="44">(Microbial infection) Interacts with herpes virus 8/HHV-8 protein vIRF-2; this interaction modulates antiviral signaling via disruption of USP7 interactions with innate immune signaling proteins TRAF3 and TRAF6 thus affecting their ubiquitination.</text>
</comment>
<comment type="interaction">
    <interactant intactId="EBI-302474">
        <id>Q93009</id>
    </interactant>
    <interactant intactId="EBI-11954519">
        <id>Q49AR9</id>
        <label>ANKS1A</label>
    </interactant>
    <organismsDiffer>false</organismsDiffer>
    <experiments>3</experiments>
</comment>
<comment type="interaction">
    <interactant intactId="EBI-302474">
        <id>Q93009</id>
    </interactant>
    <interactant intactId="EBI-950027">
        <id>Q6W2J9</id>
        <label>BCOR</label>
    </interactant>
    <organismsDiffer>false</organismsDiffer>
    <experiments>4</experiments>
</comment>
<comment type="interaction">
    <interactant intactId="EBI-302474">
        <id>Q93009</id>
    </interactant>
    <interactant intactId="EBI-2341576">
        <id>P35226</id>
        <label>BMI1</label>
    </interactant>
    <organismsDiffer>false</organismsDiffer>
    <experiments>7</experiments>
</comment>
<comment type="interaction">
    <interactant intactId="EBI-302474">
        <id>Q93009</id>
    </interactant>
    <interactant intactId="EBI-712912">
        <id>Q9HC52</id>
        <label>CBX8</label>
    </interactant>
    <organismsDiffer>false</organismsDiffer>
    <experiments>7</experiments>
</comment>
<comment type="interaction">
    <interactant intactId="EBI-302474">
        <id>Q93009</id>
    </interactant>
    <interactant intactId="EBI-1180783">
        <id>O96017</id>
        <label>CHEK2</label>
    </interactant>
    <organismsDiffer>false</organismsDiffer>
    <experiments>2</experiments>
</comment>
<comment type="interaction">
    <interactant intactId="EBI-302474">
        <id>Q93009</id>
    </interactant>
    <interactant intactId="EBI-77321">
        <id>Q9UER7</id>
        <label>DAXX</label>
    </interactant>
    <organismsDiffer>false</organismsDiffer>
    <experiments>16</experiments>
</comment>
<comment type="interaction">
    <interactant intactId="EBI-302474">
        <id>Q93009</id>
    </interactant>
    <interactant intactId="EBI-949966">
        <id>Q9HCI5</id>
        <label>MAGEE1</label>
    </interactant>
    <organismsDiffer>false</organismsDiffer>
    <experiments>2</experiments>
</comment>
<comment type="interaction">
    <interactant intactId="EBI-302474">
        <id>Q93009</id>
    </interactant>
    <interactant intactId="EBI-5668174">
        <id>Q9UJ55</id>
        <label>MAGEL2</label>
    </interactant>
    <organismsDiffer>false</organismsDiffer>
    <experiments>6</experiments>
</comment>
<comment type="interaction">
    <interactant intactId="EBI-302474">
        <id>Q93009</id>
    </interactant>
    <interactant intactId="EBI-3932027">
        <id>P21145</id>
        <label>MAL</label>
    </interactant>
    <organismsDiffer>false</organismsDiffer>
    <experiments>3</experiments>
</comment>
<comment type="interaction">
    <interactant intactId="EBI-302474">
        <id>Q93009</id>
    </interactant>
    <interactant intactId="EBI-389668">
        <id>Q00987</id>
        <label>MDM2</label>
    </interactant>
    <organismsDiffer>false</organismsDiffer>
    <experiments>34</experiments>
</comment>
<comment type="interaction">
    <interactant intactId="EBI-302474">
        <id>Q93009</id>
    </interactant>
    <interactant intactId="EBI-398437">
        <id>O15151</id>
        <label>MDM4</label>
    </interactant>
    <organismsDiffer>false</organismsDiffer>
    <experiments>15</experiments>
</comment>
<comment type="interaction">
    <interactant intactId="EBI-302474">
        <id>Q93009</id>
    </interactant>
    <interactant intactId="EBI-2864451">
        <id>Q5U5Q3</id>
        <label>MEX3C</label>
    </interactant>
    <organismsDiffer>false</organismsDiffer>
    <experiments>3</experiments>
</comment>
<comment type="interaction">
    <interactant intactId="EBI-302474">
        <id>Q93009</id>
    </interactant>
    <interactant intactId="EBI-447677">
        <id>Q99836</id>
        <label>MYD88</label>
    </interactant>
    <organismsDiffer>false</organismsDiffer>
    <experiments>3</experiments>
</comment>
<comment type="interaction">
    <interactant intactId="EBI-302474">
        <id>Q93009</id>
    </interactant>
    <interactant intactId="EBI-2129767">
        <id>P35227</id>
        <label>PCGF2</label>
    </interactant>
    <organismsDiffer>false</organismsDiffer>
    <experiments>5</experiments>
</comment>
<comment type="interaction">
    <interactant intactId="EBI-302474">
        <id>Q93009</id>
    </interactant>
    <interactant intactId="EBI-15722967">
        <id>P60484-1</id>
        <label>PTEN</label>
    </interactant>
    <organismsDiffer>false</organismsDiffer>
    <experiments>5</experiments>
</comment>
<comment type="interaction">
    <interactant intactId="EBI-302474">
        <id>Q93009</id>
    </interactant>
    <interactant intactId="EBI-491274">
        <id>P06400</id>
        <label>RB1</label>
    </interactant>
    <organismsDiffer>false</organismsDiffer>
    <experiments>8</experiments>
</comment>
<comment type="interaction">
    <interactant intactId="EBI-302474">
        <id>Q93009</id>
    </interactant>
    <interactant intactId="EBI-752313">
        <id>Q06587</id>
        <label>RING1</label>
    </interactant>
    <organismsDiffer>false</organismsDiffer>
    <experiments>5</experiments>
</comment>
<comment type="interaction">
    <interactant intactId="EBI-302474">
        <id>Q93009</id>
    </interactant>
    <interactant intactId="EBI-722416">
        <id>Q99496</id>
        <label>RNF2</label>
    </interactant>
    <organismsDiffer>false</organismsDiffer>
    <experiments>5</experiments>
</comment>
<comment type="interaction">
    <interactant intactId="EBI-302474">
        <id>Q93009</id>
    </interactant>
    <interactant intactId="EBI-347161">
        <id>P84022</id>
        <label>SMAD3</label>
    </interactant>
    <organismsDiffer>false</organismsDiffer>
    <experiments>2</experiments>
</comment>
<comment type="interaction">
    <interactant intactId="EBI-302474">
        <id>Q93009</id>
    </interactant>
    <interactant intactId="EBI-6124081">
        <id>P48431</id>
        <label>SOX2</label>
    </interactant>
    <organismsDiffer>false</organismsDiffer>
    <experiments>3</experiments>
</comment>
<comment type="interaction">
    <interactant intactId="EBI-302474">
        <id>Q93009</id>
    </interactant>
    <interactant intactId="EBI-764356">
        <id>Q99426</id>
        <label>TBCB</label>
    </interactant>
    <organismsDiffer>false</organismsDiffer>
    <experiments>2</experiments>
</comment>
<comment type="interaction">
    <interactant intactId="EBI-302474">
        <id>Q93009</id>
    </interactant>
    <interactant intactId="EBI-366083">
        <id>P04637</id>
        <label>TP53</label>
    </interactant>
    <organismsDiffer>false</organismsDiffer>
    <experiments>19</experiments>
</comment>
<comment type="interaction">
    <interactant intactId="EBI-302474">
        <id>Q93009</id>
    </interactant>
    <interactant intactId="EBI-719493">
        <id>P14373</id>
        <label>TRIM27</label>
    </interactant>
    <organismsDiffer>false</organismsDiffer>
    <experiments>12</experiments>
</comment>
<comment type="interaction">
    <interactant intactId="EBI-302474">
        <id>Q93009</id>
    </interactant>
    <interactant intactId="EBI-3436472">
        <id>Q86VY4</id>
        <label>TSPYL5</label>
    </interactant>
    <organismsDiffer>false</organismsDiffer>
    <experiments>4</experiments>
</comment>
<comment type="interaction">
    <interactant intactId="EBI-302474">
        <id>Q93009</id>
    </interactant>
    <interactant intactId="EBI-7254550">
        <id>P36508</id>
        <label>ZNF76</label>
    </interactant>
    <organismsDiffer>false</organismsDiffer>
    <experiments>3</experiments>
</comment>
<comment type="interaction">
    <interactant intactId="EBI-302474">
        <id>Q93009</id>
    </interactant>
    <interactant intactId="EBI-996522">
        <id>P03211</id>
        <label>EBNA1</label>
    </interactant>
    <organismsDiffer>true</organismsDiffer>
    <experiments>5</experiments>
</comment>
<comment type="interaction">
    <interactant intactId="EBI-302474">
        <id>Q93009</id>
    </interactant>
    <interactant intactId="EBI-2608731">
        <id>Q77UV9</id>
        <label>KIE-2</label>
    </interactant>
    <organismsDiffer>true</organismsDiffer>
    <experiments>2</experiments>
</comment>
<comment type="interaction">
    <interactant intactId="EBI-302474">
        <id>Q93009</id>
    </interactant>
    <interactant intactId="EBI-2603376">
        <id>O35618</id>
        <label>Mdm4</label>
    </interactant>
    <organismsDiffer>true</organismsDiffer>
    <experiments>4</experiments>
</comment>
<comment type="interaction">
    <interactant intactId="EBI-302474">
        <id>Q93009</id>
    </interactant>
    <interactant intactId="EBI-15951580">
        <id>F5H9D8</id>
        <label>vIRF-4</label>
    </interactant>
    <organismsDiffer>true</organismsDiffer>
    <experiments>13</experiments>
</comment>
<comment type="subcellular location">
    <subcellularLocation>
        <location evidence="22 30 33 38">Nucleus</location>
    </subcellularLocation>
    <subcellularLocation>
        <location evidence="33">Cytoplasm</location>
    </subcellularLocation>
    <subcellularLocation>
        <location evidence="47">Nucleus</location>
        <location evidence="47">PML body</location>
    </subcellularLocation>
    <subcellularLocation>
        <location evidence="19">Chromosome</location>
    </subcellularLocation>
    <text>Present in a minority of ND10 nuclear bodies. Association with ICP0/VMW110 at early times of infection leads to an increased proportion of USP7-containing ND10. Colocalizes with ATXN1 in the nucleus. Colocalized with DAXX in speckled structures. Colocalized with PML and PTEN in promyelocytic leukemia protein (PML) nuclear bodies.</text>
</comment>
<comment type="alternative products">
    <event type="alternative splicing"/>
    <isoform>
        <id>Q93009-1</id>
        <name>1</name>
        <sequence type="displayed"/>
    </isoform>
    <isoform>
        <id>Q93009-2</id>
        <name>2</name>
        <name>USP7 beta</name>
        <sequence type="not described"/>
    </isoform>
    <isoform>
        <id>Q93009-3</id>
        <name>3</name>
        <sequence type="described" ref="VSP_054884"/>
    </isoform>
</comment>
<comment type="tissue specificity">
    <text evidence="17 22">Expressed in neural progenitor cells (at protein level) (PubMed:21258371). Widely expressed. Overexpressed in prostate cancer.</text>
</comment>
<comment type="induction">
    <text evidence="22 30">Up-regulated in regulatory T-cells (Treg). Down-regulated during neural progenitor cell differentiation (PubMed:21258371).</text>
</comment>
<comment type="domain">
    <text evidence="1">The C-terminus plays a role in its oligomerization.</text>
</comment>
<comment type="PTM">
    <text evidence="14">Isoform 1: Phosphorylated. Isoform 1 is phosphorylated at positions Ser-18 and Ser-963. Isoform 2: Not phosphorylated.</text>
</comment>
<comment type="PTM">
    <text>Isoform 1: Polyneddylated. Isoform 2: Not Polyneddylated.</text>
</comment>
<comment type="PTM">
    <text>Isoform 1 and isoform 2: Not sumoylated.</text>
</comment>
<comment type="PTM">
    <text evidence="10 14">Isoform 1 and isoform 2: Polyubiquitinated by herpesvirus 1 trans-acting transcriptional protein ICP0/VMW110; leading to its subsequent proteasomal degradation. Isoform 1: Ubiquitinated at Lys-869.</text>
</comment>
<comment type="disease" evidence="37 43">
    <disease id="DI-05866">
        <name>Hao-Fountain syndrome</name>
        <acronym>HAFOUS</acronym>
        <description>An autosomal dominant neurodevelopmental disorder characterized by global developmental delay, varying degrees of intellectual disability, autism spectrum disorder, poor or absent speech, and mild facial dysmorphism. Most patients develop seizures. Additional variable features include hypotonia, hypogonadism in males, and ocular anomalies.</description>
        <dbReference type="MIM" id="616863"/>
    </disease>
    <text>The disease is caused by variants affecting the gene represented in this entry.</text>
</comment>
<comment type="similarity">
    <text evidence="51">Belongs to the peptidase C19 family.</text>
</comment>
<comment type="online information" name="Atlas of Genetics and Cytogenetics in Oncology and Haematology">
    <link uri="https://atlasgeneticsoncology.org/gene/42773/USP7"/>
</comment>
<proteinExistence type="evidence at protein level"/>
<protein>
    <recommendedName>
        <fullName>Ubiquitin carboxyl-terminal hydrolase 7</fullName>
        <ecNumber evidence="5 7 8 9 13 17 23">3.4.19.12</ecNumber>
    </recommendedName>
    <alternativeName>
        <fullName>Deubiquitinating enzyme 7</fullName>
    </alternativeName>
    <alternativeName>
        <fullName evidence="50">Herpesvirus-associated ubiquitin-specific protease</fullName>
    </alternativeName>
    <alternativeName>
        <fullName>Ubiquitin thioesterase 7</fullName>
    </alternativeName>
    <alternativeName>
        <fullName>Ubiquitin-specific-processing protease 7</fullName>
    </alternativeName>
</protein>